<accession>Q2XVP4</accession>
<comment type="function">
    <text evidence="8">Tubulin is the major constituent of microtubules, protein filaments consisting of alpha- and beta-tubulin heterodimers (PubMed:7225365). Microtubules grow by the addition of GTP-tubulin dimers to the microtubule end, where a stabilizing cap forms (PubMed:7225365). Below the cap, tubulin dimers are in GDP-bound state, owing to GTPase activity of alpha-tubulin (PubMed:7225365).</text>
</comment>
<comment type="catalytic activity">
    <reaction evidence="3">
        <text>GTP + H2O = GDP + phosphate + H(+)</text>
        <dbReference type="Rhea" id="RHEA:19669"/>
        <dbReference type="ChEBI" id="CHEBI:15377"/>
        <dbReference type="ChEBI" id="CHEBI:15378"/>
        <dbReference type="ChEBI" id="CHEBI:37565"/>
        <dbReference type="ChEBI" id="CHEBI:43474"/>
        <dbReference type="ChEBI" id="CHEBI:58189"/>
    </reaction>
    <physiologicalReaction direction="left-to-right" evidence="3">
        <dbReference type="Rhea" id="RHEA:19670"/>
    </physiologicalReaction>
</comment>
<comment type="cofactor">
    <cofactor evidence="3">
        <name>Mg(2+)</name>
        <dbReference type="ChEBI" id="CHEBI:18420"/>
    </cofactor>
</comment>
<comment type="subunit">
    <text evidence="3 4 8">Heterodimer of alpha- and beta-tubulin (PubMed:7225365). A typical microtubule is a hollow water-filled tube with an outer diameter of 25 nm and an inner diameter of 15 nM (By similarity). Alpha-beta heterodimers associate head-to-tail to form protofilaments running lengthwise along the microtubule wall with the beta-tubulin subunit facing the microtubule plus end conferring a structural polarity (By similarity). Microtubules usually have 13 protofilaments but different protofilament numbers can be found in some organisms and specialized cells (By similarity). Interacts with gamma-tubulin; the interaction allows microtubules to nucleate from the gamma-tubulin ring complex (gTuRC) (By similarity). Nascent microtubule interacts (via alpha-tubulin MREC motif) with TTC5/STRAP; this interaction may result in tubulin mRNA-targeted degradation (By similarity). Component of sperm flagellar doublet microtubules (By similarity).</text>
</comment>
<comment type="subcellular location">
    <subcellularLocation>
        <location evidence="8">Cytoplasm</location>
        <location evidence="8">Cytoskeleton</location>
    </subcellularLocation>
</comment>
<comment type="domain">
    <text evidence="3">The MREC motif mediates interaction with TTC5/STRAP and may be critical for tubulin autoregulation.</text>
</comment>
<comment type="PTM">
    <text evidence="2">Some glutamate residues at the C-terminus are polyglycylated, resulting in polyglycine chains on the gamma-carboxyl group. Glycylation is mainly limited to tubulin incorporated into axonemes (cilia and flagella) whereas glutamylation is prevalent in neuronal cells, centrioles, axonemes, and the mitotic spindle. Both modifications can coexist on the same protein on adjacent residues, and lowering polyglycylation levels increases polyglutamylation, and reciprocally. Cilia and flagella glycylation is required for their stability and maintenance. Flagella glycylation controls sperm motility.</text>
</comment>
<comment type="PTM">
    <text evidence="2 6">Some glutamate residues at the C-terminus are polyglutamylated, resulting in polyglutamate chains on the gamma-carboxyl group (By similarity). Polyglutamylation plays a key role in microtubule severing by spastin (SPAST). SPAST preferentially recognizes and acts on microtubules decorated with short polyglutamate tails: severing activity by SPAST increases as the number of glutamates per tubulin rises from one to eight, but decreases beyond this glutamylation threshold (By similarity). Glutamylation is also involved in cilia motility (By similarity).</text>
</comment>
<comment type="PTM">
    <text evidence="6">Acetylation of alpha chains at Lys-40 is located inside the microtubule lumen. This modification has been correlated with increased microtubule stability, intracellular transport and ciliary assembly.</text>
</comment>
<comment type="PTM">
    <text evidence="3">Methylation of alpha chains at Lys-40 is found in mitotic microtubules and is required for normal mitosis and cytokinesis contributing to genomic stability.</text>
</comment>
<comment type="PTM">
    <text evidence="6">Nitration of Tyr-451 is irreversible and interferes with normal dynein intracellular distribution.</text>
</comment>
<comment type="PTM">
    <text evidence="4 6">Undergoes a tyrosination/detyrosination cycle, the cyclic removal and re-addition of a C-terminal tyrosine residue by the enzymes tubulin tyrosine carboxypeptidase (MATCAP1, VASH1 or VASH2) and tubulin tyrosine ligase (TTL), respectively.</text>
</comment>
<comment type="PTM">
    <molecule>Tubulin alpha-1B chain</molecule>
    <text evidence="4 6">Tyrosination promotes microtubule interaction with CAP-Gly domain-containing proteins such as CLIP1, CLIP2 and DCTN1 (By similarity). Tyrosination regulates the initiation of dynein-dynactin motility via interaction with DCTN1, which brings the dynein-dynactin complex into contact with microtubules. In neurons, tyrosinated tubulins mediate the initiation of retrograde vesicle transport (By similarity).</text>
</comment>
<comment type="PTM">
    <molecule>Detyrosinated tubulin alpha-1B chain</molecule>
    <text evidence="2 3">Detyrosination is involved in metaphase plate congression by guiding chromosomes during mitosis: detyrosination promotes interaction with CENPE, promoting pole-proximal transport of chromosomes toward the equator (By similarity). Detyrosination increases microtubules-dependent mechanotransduction in dystrophic cardiac and skeletal muscle. In cardiomyocytes, detyrosinated microtubules are required to resist to contractile compression during contraction: detyrosination promotes association with desmin (DES) at force-generating sarcomeres, leading to buckled microtubules and mechanical resistance to contraction (By similarity).</text>
</comment>
<comment type="similarity">
    <text evidence="9">Belongs to the tubulin family.</text>
</comment>
<gene>
    <name type="primary">TUBA1B</name>
</gene>
<name>TBA1B_PIG</name>
<feature type="chain" id="PRO_0000253590" description="Tubulin alpha-1B chain">
    <location>
        <begin position="1"/>
        <end position="451"/>
    </location>
</feature>
<feature type="chain" id="PRO_0000437389" description="Detyrosinated tubulin alpha-1B chain" evidence="3">
    <location>
        <begin position="1"/>
        <end position="450"/>
    </location>
</feature>
<feature type="region of interest" description="Disordered" evidence="7">
    <location>
        <begin position="432"/>
        <end position="451"/>
    </location>
</feature>
<feature type="short sequence motif" description="MREC motif" evidence="3">
    <location>
        <begin position="1"/>
        <end position="4"/>
    </location>
</feature>
<feature type="active site" evidence="3">
    <location>
        <position position="254"/>
    </location>
</feature>
<feature type="binding site" evidence="3">
    <location>
        <position position="10"/>
    </location>
    <ligand>
        <name>GTP</name>
        <dbReference type="ChEBI" id="CHEBI:37565"/>
    </ligand>
</feature>
<feature type="binding site" evidence="3">
    <location>
        <position position="11"/>
    </location>
    <ligand>
        <name>GTP</name>
        <dbReference type="ChEBI" id="CHEBI:37565"/>
    </ligand>
</feature>
<feature type="binding site" evidence="3">
    <location>
        <position position="12"/>
    </location>
    <ligand>
        <name>GTP</name>
        <dbReference type="ChEBI" id="CHEBI:37565"/>
    </ligand>
</feature>
<feature type="binding site" evidence="3">
    <location>
        <position position="15"/>
    </location>
    <ligand>
        <name>GTP</name>
        <dbReference type="ChEBI" id="CHEBI:37565"/>
    </ligand>
</feature>
<feature type="binding site" evidence="3">
    <location>
        <position position="71"/>
    </location>
    <ligand>
        <name>GTP</name>
        <dbReference type="ChEBI" id="CHEBI:37565"/>
    </ligand>
</feature>
<feature type="binding site" evidence="3">
    <location>
        <position position="71"/>
    </location>
    <ligand>
        <name>Mg(2+)</name>
        <dbReference type="ChEBI" id="CHEBI:18420"/>
    </ligand>
</feature>
<feature type="binding site" evidence="3">
    <location>
        <position position="99"/>
    </location>
    <ligand>
        <name>GTP</name>
        <dbReference type="ChEBI" id="CHEBI:37565"/>
    </ligand>
</feature>
<feature type="binding site" evidence="3">
    <location>
        <position position="140"/>
    </location>
    <ligand>
        <name>GTP</name>
        <dbReference type="ChEBI" id="CHEBI:37565"/>
    </ligand>
</feature>
<feature type="binding site" evidence="3">
    <location>
        <position position="143"/>
    </location>
    <ligand>
        <name>GTP</name>
        <dbReference type="ChEBI" id="CHEBI:37565"/>
    </ligand>
</feature>
<feature type="binding site" evidence="3">
    <location>
        <position position="144"/>
    </location>
    <ligand>
        <name>GTP</name>
        <dbReference type="ChEBI" id="CHEBI:37565"/>
    </ligand>
</feature>
<feature type="binding site" evidence="3">
    <location>
        <position position="145"/>
    </location>
    <ligand>
        <name>GTP</name>
        <dbReference type="ChEBI" id="CHEBI:37565"/>
    </ligand>
</feature>
<feature type="binding site" evidence="3">
    <location>
        <position position="146"/>
    </location>
    <ligand>
        <name>GTP</name>
        <dbReference type="ChEBI" id="CHEBI:37565"/>
    </ligand>
</feature>
<feature type="binding site" evidence="3">
    <location>
        <position position="179"/>
    </location>
    <ligand>
        <name>GTP</name>
        <dbReference type="ChEBI" id="CHEBI:37565"/>
    </ligand>
</feature>
<feature type="binding site" evidence="3">
    <location>
        <position position="183"/>
    </location>
    <ligand>
        <name>GTP</name>
        <dbReference type="ChEBI" id="CHEBI:37565"/>
    </ligand>
</feature>
<feature type="binding site" evidence="3">
    <location>
        <position position="206"/>
    </location>
    <ligand>
        <name>GTP</name>
        <dbReference type="ChEBI" id="CHEBI:37565"/>
    </ligand>
</feature>
<feature type="binding site" evidence="3">
    <location>
        <position position="224"/>
    </location>
    <ligand>
        <name>GTP</name>
        <dbReference type="ChEBI" id="CHEBI:37565"/>
    </ligand>
</feature>
<feature type="binding site" evidence="3">
    <location>
        <position position="228"/>
    </location>
    <ligand>
        <name>GTP</name>
        <dbReference type="ChEBI" id="CHEBI:37565"/>
    </ligand>
</feature>
<feature type="binding site" evidence="3">
    <location>
        <position position="252"/>
    </location>
    <ligand>
        <name>GTP</name>
        <dbReference type="ChEBI" id="CHEBI:37565"/>
    </ligand>
</feature>
<feature type="site" description="Involved in polymerization" evidence="1">
    <location>
        <position position="451"/>
    </location>
</feature>
<feature type="modified residue" description="N6,N6,N6-trimethyllysine; alternate" evidence="3">
    <location>
        <position position="40"/>
    </location>
</feature>
<feature type="modified residue" description="N6-acetyllysine; alternate" evidence="3">
    <location>
        <position position="40"/>
    </location>
</feature>
<feature type="modified residue" description="Phosphoserine" evidence="3">
    <location>
        <position position="48"/>
    </location>
</feature>
<feature type="modified residue" description="Phosphoserine" evidence="3">
    <location>
        <position position="232"/>
    </location>
</feature>
<feature type="modified residue" description="3'-nitrotyrosine" evidence="5">
    <location>
        <position position="282"/>
    </location>
</feature>
<feature type="modified residue" description="Omega-N-methylarginine" evidence="3">
    <location>
        <position position="339"/>
    </location>
</feature>
<feature type="modified residue" description="Phosphoserine" evidence="5">
    <location>
        <position position="439"/>
    </location>
</feature>
<feature type="modified residue" description="5-glutamyl polyglutamate" evidence="3">
    <location>
        <position position="443"/>
    </location>
</feature>
<feature type="modified residue" description="5-glutamyl polyglutamate" evidence="4">
    <location>
        <position position="445"/>
    </location>
</feature>
<feature type="modified residue" description="3'-nitrotyrosine" evidence="6">
    <location>
        <position position="451"/>
    </location>
</feature>
<feature type="cross-link" description="Glycyl lysine isopeptide (Lys-Gly) (interchain with G-Cter in ubiquitin)" evidence="3">
    <location>
        <position position="326"/>
    </location>
</feature>
<feature type="cross-link" description="Glycyl lysine isopeptide (Lys-Gly) (interchain with G-Cter in ubiquitin)" evidence="3">
    <location>
        <position position="370"/>
    </location>
</feature>
<feature type="strand" evidence="14">
    <location>
        <begin position="4"/>
        <end position="9"/>
    </location>
</feature>
<feature type="helix" evidence="14">
    <location>
        <begin position="10"/>
        <end position="28"/>
    </location>
</feature>
<feature type="strand" evidence="25">
    <location>
        <begin position="32"/>
        <end position="34"/>
    </location>
</feature>
<feature type="helix" evidence="22">
    <location>
        <begin position="37"/>
        <end position="40"/>
    </location>
</feature>
<feature type="strand" evidence="17">
    <location>
        <begin position="41"/>
        <end position="43"/>
    </location>
</feature>
<feature type="strand" evidence="20">
    <location>
        <begin position="44"/>
        <end position="46"/>
    </location>
</feature>
<feature type="helix" evidence="14">
    <location>
        <begin position="48"/>
        <end position="51"/>
    </location>
</feature>
<feature type="strand" evidence="14">
    <location>
        <begin position="53"/>
        <end position="55"/>
    </location>
</feature>
<feature type="strand" evidence="18">
    <location>
        <begin position="57"/>
        <end position="59"/>
    </location>
</feature>
<feature type="strand" evidence="14">
    <location>
        <begin position="60"/>
        <end position="72"/>
    </location>
</feature>
<feature type="helix" evidence="14">
    <location>
        <begin position="73"/>
        <end position="79"/>
    </location>
</feature>
<feature type="turn" evidence="14">
    <location>
        <begin position="82"/>
        <end position="86"/>
    </location>
</feature>
<feature type="helix" evidence="14">
    <location>
        <begin position="89"/>
        <end position="91"/>
    </location>
</feature>
<feature type="strand" evidence="14">
    <location>
        <begin position="92"/>
        <end position="94"/>
    </location>
</feature>
<feature type="helix" evidence="14">
    <location>
        <begin position="103"/>
        <end position="107"/>
    </location>
</feature>
<feature type="helix" evidence="14">
    <location>
        <begin position="109"/>
        <end position="127"/>
    </location>
</feature>
<feature type="strand" evidence="23">
    <location>
        <begin position="129"/>
        <end position="131"/>
    </location>
</feature>
<feature type="strand" evidence="14">
    <location>
        <begin position="134"/>
        <end position="143"/>
    </location>
</feature>
<feature type="helix" evidence="14">
    <location>
        <begin position="144"/>
        <end position="160"/>
    </location>
</feature>
<feature type="turn" evidence="14">
    <location>
        <begin position="161"/>
        <end position="163"/>
    </location>
</feature>
<feature type="strand" evidence="14">
    <location>
        <begin position="164"/>
        <end position="172"/>
    </location>
</feature>
<feature type="turn" evidence="14">
    <location>
        <begin position="175"/>
        <end position="177"/>
    </location>
</feature>
<feature type="strand" evidence="19">
    <location>
        <begin position="179"/>
        <end position="182"/>
    </location>
</feature>
<feature type="helix" evidence="14">
    <location>
        <begin position="183"/>
        <end position="194"/>
    </location>
</feature>
<feature type="helix" evidence="14">
    <location>
        <begin position="195"/>
        <end position="197"/>
    </location>
</feature>
<feature type="strand" evidence="14">
    <location>
        <begin position="199"/>
        <end position="205"/>
    </location>
</feature>
<feature type="helix" evidence="14">
    <location>
        <begin position="206"/>
        <end position="216"/>
    </location>
</feature>
<feature type="helix" evidence="14">
    <location>
        <begin position="224"/>
        <end position="243"/>
    </location>
</feature>
<feature type="strand" evidence="14">
    <location>
        <begin position="247"/>
        <end position="249"/>
    </location>
</feature>
<feature type="helix" evidence="14">
    <location>
        <begin position="252"/>
        <end position="259"/>
    </location>
</feature>
<feature type="strand" evidence="14">
    <location>
        <begin position="261"/>
        <end position="264"/>
    </location>
</feature>
<feature type="strand" evidence="14">
    <location>
        <begin position="269"/>
        <end position="273"/>
    </location>
</feature>
<feature type="strand" evidence="16">
    <location>
        <begin position="277"/>
        <end position="279"/>
    </location>
</feature>
<feature type="helix" evidence="26">
    <location>
        <begin position="281"/>
        <end position="283"/>
    </location>
</feature>
<feature type="helix" evidence="14">
    <location>
        <begin position="288"/>
        <end position="293"/>
    </location>
</feature>
<feature type="helix" evidence="14">
    <location>
        <begin position="294"/>
        <end position="296"/>
    </location>
</feature>
<feature type="helix" evidence="14">
    <location>
        <begin position="298"/>
        <end position="300"/>
    </location>
</feature>
<feature type="strand" evidence="14">
    <location>
        <begin position="301"/>
        <end position="303"/>
    </location>
</feature>
<feature type="helix" evidence="14">
    <location>
        <begin position="307"/>
        <end position="309"/>
    </location>
</feature>
<feature type="strand" evidence="14">
    <location>
        <begin position="312"/>
        <end position="322"/>
    </location>
</feature>
<feature type="helix" evidence="14">
    <location>
        <begin position="325"/>
        <end position="338"/>
    </location>
</feature>
<feature type="strand" evidence="21">
    <location>
        <begin position="339"/>
        <end position="341"/>
    </location>
</feature>
<feature type="strand" evidence="15">
    <location>
        <begin position="345"/>
        <end position="347"/>
    </location>
</feature>
<feature type="strand" evidence="14">
    <location>
        <begin position="349"/>
        <end position="358"/>
    </location>
</feature>
<feature type="strand" evidence="14">
    <location>
        <begin position="366"/>
        <end position="368"/>
    </location>
</feature>
<feature type="strand" evidence="14">
    <location>
        <begin position="372"/>
        <end position="381"/>
    </location>
</feature>
<feature type="helix" evidence="14">
    <location>
        <begin position="382"/>
        <end position="384"/>
    </location>
</feature>
<feature type="helix" evidence="14">
    <location>
        <begin position="385"/>
        <end position="399"/>
    </location>
</feature>
<feature type="turn" evidence="14">
    <location>
        <begin position="400"/>
        <end position="404"/>
    </location>
</feature>
<feature type="helix" evidence="14">
    <location>
        <begin position="405"/>
        <end position="409"/>
    </location>
</feature>
<feature type="turn" evidence="14">
    <location>
        <begin position="410"/>
        <end position="412"/>
    </location>
</feature>
<feature type="helix" evidence="14">
    <location>
        <begin position="416"/>
        <end position="436"/>
    </location>
</feature>
<feature type="strand" evidence="24">
    <location>
        <begin position="441"/>
        <end position="445"/>
    </location>
</feature>
<evidence type="ECO:0000250" key="1"/>
<evidence type="ECO:0000250" key="2">
    <source>
        <dbReference type="UniProtKB" id="P05213"/>
    </source>
</evidence>
<evidence type="ECO:0000250" key="3">
    <source>
        <dbReference type="UniProtKB" id="P68363"/>
    </source>
</evidence>
<evidence type="ECO:0000250" key="4">
    <source>
        <dbReference type="UniProtKB" id="P68369"/>
    </source>
</evidence>
<evidence type="ECO:0000250" key="5">
    <source>
        <dbReference type="UniProtKB" id="P68373"/>
    </source>
</evidence>
<evidence type="ECO:0000250" key="6">
    <source>
        <dbReference type="UniProtKB" id="Q71U36"/>
    </source>
</evidence>
<evidence type="ECO:0000256" key="7">
    <source>
        <dbReference type="SAM" id="MobiDB-lite"/>
    </source>
</evidence>
<evidence type="ECO:0000269" key="8">
    <source>
    </source>
</evidence>
<evidence type="ECO:0000305" key="9"/>
<evidence type="ECO:0007744" key="10">
    <source>
        <dbReference type="PDB" id="5HNW"/>
    </source>
</evidence>
<evidence type="ECO:0007744" key="11">
    <source>
        <dbReference type="PDB" id="5HNX"/>
    </source>
</evidence>
<evidence type="ECO:0007744" key="12">
    <source>
        <dbReference type="PDB" id="5HNY"/>
    </source>
</evidence>
<evidence type="ECO:0007744" key="13">
    <source>
        <dbReference type="PDB" id="5HNZ"/>
    </source>
</evidence>
<evidence type="ECO:0007829" key="14">
    <source>
        <dbReference type="PDB" id="5EZY"/>
    </source>
</evidence>
<evidence type="ECO:0007829" key="15">
    <source>
        <dbReference type="PDB" id="5Z4U"/>
    </source>
</evidence>
<evidence type="ECO:0007829" key="16">
    <source>
        <dbReference type="PDB" id="6BR1"/>
    </source>
</evidence>
<evidence type="ECO:0007829" key="17">
    <source>
        <dbReference type="PDB" id="6JCJ"/>
    </source>
</evidence>
<evidence type="ECO:0007829" key="18">
    <source>
        <dbReference type="PDB" id="6LS4"/>
    </source>
</evidence>
<evidence type="ECO:0007829" key="19">
    <source>
        <dbReference type="PDB" id="6O2R"/>
    </source>
</evidence>
<evidence type="ECO:0007829" key="20">
    <source>
        <dbReference type="PDB" id="6WWG"/>
    </source>
</evidence>
<evidence type="ECO:0007829" key="21">
    <source>
        <dbReference type="PDB" id="6WWR"/>
    </source>
</evidence>
<evidence type="ECO:0007829" key="22">
    <source>
        <dbReference type="PDB" id="7TQY"/>
    </source>
</evidence>
<evidence type="ECO:0007829" key="23">
    <source>
        <dbReference type="PDB" id="7TR1"/>
    </source>
</evidence>
<evidence type="ECO:0007829" key="24">
    <source>
        <dbReference type="PDB" id="8UTU"/>
    </source>
</evidence>
<evidence type="ECO:0007829" key="25">
    <source>
        <dbReference type="PDB" id="8UTW"/>
    </source>
</evidence>
<evidence type="ECO:0007829" key="26">
    <source>
        <dbReference type="PDB" id="8V4L"/>
    </source>
</evidence>
<organism>
    <name type="scientific">Sus scrofa</name>
    <name type="common">Pig</name>
    <dbReference type="NCBI Taxonomy" id="9823"/>
    <lineage>
        <taxon>Eukaryota</taxon>
        <taxon>Metazoa</taxon>
        <taxon>Chordata</taxon>
        <taxon>Craniata</taxon>
        <taxon>Vertebrata</taxon>
        <taxon>Euteleostomi</taxon>
        <taxon>Mammalia</taxon>
        <taxon>Eutheria</taxon>
        <taxon>Laurasiatheria</taxon>
        <taxon>Artiodactyla</taxon>
        <taxon>Suina</taxon>
        <taxon>Suidae</taxon>
        <taxon>Sus</taxon>
    </lineage>
</organism>
<protein>
    <recommendedName>
        <fullName>Tubulin alpha-1B chain</fullName>
        <ecNumber evidence="3">3.6.5.-</ecNumber>
    </recommendedName>
    <alternativeName>
        <fullName>Alpha-tubulin ubiquitous</fullName>
    </alternativeName>
    <alternativeName>
        <fullName>Tubulin K-alpha-1</fullName>
    </alternativeName>
    <alternativeName>
        <fullName>Tubulin alpha-ubiquitous chain</fullName>
    </alternativeName>
    <component>
        <recommendedName>
            <fullName>Detyrosinated tubulin alpha-1B chain</fullName>
        </recommendedName>
    </component>
</protein>
<proteinExistence type="evidence at protein level"/>
<reference key="1">
    <citation type="journal article" date="2006" name="Anim. Genet.">
        <title>Full-length cDNA, molecular characterization and physical mapping of five genes from a porcine fetal cDNA library.</title>
        <authorList>
            <person name="Wang H.L."/>
            <person name="Wang H."/>
            <person name="Zhu Z.M."/>
            <person name="Wu X."/>
            <person name="Yu M."/>
            <person name="Zhao S.H."/>
            <person name="Yang S.L."/>
            <person name="Li K."/>
        </authorList>
    </citation>
    <scope>NUCLEOTIDE SEQUENCE [MRNA]</scope>
</reference>
<reference key="2">
    <citation type="journal article" date="1981" name="Biochemistry">
        <title>Kinetic analysis of guanosine 5'-triphosphate hydrolysis associated with tubulin polymerization.</title>
        <authorList>
            <person name="Carlier M.F."/>
            <person name="Pantaloni D."/>
        </authorList>
    </citation>
    <scope>FUNCTION</scope>
    <scope>SUBCELLULAR LOCATION</scope>
    <scope>SUBUNIT</scope>
</reference>
<reference evidence="10 11 12 13" key="3">
    <citation type="journal article" date="2016" name="Structure">
        <title>Structural Basis of Backwards Motion in Kinesin-1-Kinesin-14 Chimera: Implication for Kinesin-14 Motility.</title>
        <authorList>
            <person name="Yamagishi M."/>
            <person name="Shigematsu H."/>
            <person name="Yokoyama T."/>
            <person name="Kikkawa M."/>
            <person name="Sugawa M."/>
            <person name="Aoki M."/>
            <person name="Shirouzu M."/>
            <person name="Yajima J."/>
            <person name="Nitta R."/>
        </authorList>
    </citation>
    <scope>STRUCTURE BY ELECTRON MICROSCOPY (5.80 ANGSTROMS) IN COMPLEX WITH ADP AND CHIMERIC CONSTRUCT OF DROSOPHILA NCD AND RAT KIF5C</scope>
</reference>
<sequence>MRECISIHVGQAGVQIGNACWELYCLEHGIQPDGQMPSDKTIGGGDDSFNTFFSETGAGKHVPRAVFVDLEPTVIDEVRTGTYRQLFHPEQLITGKEDAANNYARGHYTIGKEIIDLVLDRIRKLADQCTGLQGFLVFHSFGGGTGSGFTSLLMERLSVDYGKKSKLEFSIYPAPQVSTAVVEPYNSILTTHTTLEHSDCAFMVDNEAIYDICRRNLDIERPTYTNLNRLISQIVSSITASLRFDGALNVDLTEFQTNLVPYPRIHFPLATYAPVISAEKAYHEQLSVAEITNACFEPANQMVKCDPRHGKYMACCLLYRGDVVPKDVNAAIATIKTKRSIQFVDWCPTGFKVGINYQPPTVVPGGDLAKVQRAVCMLSNTTAIAEAWARLDHKFDLMYAKRAFVHWYVGEGMEEGEFSEAREDMAALEKDYEEVGVDSVEGEGEEEGEEY</sequence>
<dbReference type="EC" id="3.6.5.-" evidence="3"/>
<dbReference type="EMBL" id="DQ225365">
    <property type="protein sequence ID" value="ABB58919.1"/>
    <property type="molecule type" value="mRNA"/>
</dbReference>
<dbReference type="RefSeq" id="NP_001038009.1">
    <property type="nucleotide sequence ID" value="NM_001044544.1"/>
</dbReference>
<dbReference type="PDB" id="3J8X">
    <property type="method" value="EM"/>
    <property type="resolution" value="5.00 A"/>
    <property type="chains" value="A=1-451"/>
</dbReference>
<dbReference type="PDB" id="3J8Y">
    <property type="method" value="EM"/>
    <property type="resolution" value="5.00 A"/>
    <property type="chains" value="A=1-451"/>
</dbReference>
<dbReference type="PDB" id="3JAK">
    <property type="method" value="EM"/>
    <property type="resolution" value="3.50 A"/>
    <property type="chains" value="A/C/E/J/K/L=1-451"/>
</dbReference>
<dbReference type="PDB" id="3JAL">
    <property type="method" value="EM"/>
    <property type="resolution" value="3.50 A"/>
    <property type="chains" value="A/C/E/J/K/L=1-451"/>
</dbReference>
<dbReference type="PDB" id="3JAR">
    <property type="method" value="EM"/>
    <property type="resolution" value="3.50 A"/>
    <property type="chains" value="A/C/E/J/K/L=1-451"/>
</dbReference>
<dbReference type="PDB" id="3JAS">
    <property type="method" value="EM"/>
    <property type="resolution" value="3.50 A"/>
    <property type="chains" value="A/C/E/J/K/L=1-451"/>
</dbReference>
<dbReference type="PDB" id="3JAT">
    <property type="method" value="EM"/>
    <property type="resolution" value="3.50 A"/>
    <property type="chains" value="A/C/E/J/K/L=1-451"/>
</dbReference>
<dbReference type="PDB" id="3JAW">
    <property type="method" value="EM"/>
    <property type="resolution" value="3.90 A"/>
    <property type="chains" value="A/C=1-451"/>
</dbReference>
<dbReference type="PDB" id="4ZHQ">
    <property type="method" value="X-ray"/>
    <property type="resolution" value="2.55 A"/>
    <property type="chains" value="A/C=1-451"/>
</dbReference>
<dbReference type="PDB" id="4ZI7">
    <property type="method" value="X-ray"/>
    <property type="resolution" value="2.51 A"/>
    <property type="chains" value="A/C=1-451"/>
</dbReference>
<dbReference type="PDB" id="4ZOL">
    <property type="method" value="X-ray"/>
    <property type="resolution" value="2.50 A"/>
    <property type="chains" value="A/C=1-451"/>
</dbReference>
<dbReference type="PDB" id="5CA0">
    <property type="method" value="X-ray"/>
    <property type="resolution" value="2.50 A"/>
    <property type="chains" value="A/C=1-451"/>
</dbReference>
<dbReference type="PDB" id="5EZY">
    <property type="method" value="X-ray"/>
    <property type="resolution" value="2.05 A"/>
    <property type="chains" value="A/C=1-450"/>
</dbReference>
<dbReference type="PDB" id="5FNV">
    <property type="method" value="X-ray"/>
    <property type="resolution" value="2.61 A"/>
    <property type="chains" value="A/C=1-451"/>
</dbReference>
<dbReference type="PDB" id="5H74">
    <property type="method" value="X-ray"/>
    <property type="resolution" value="2.60 A"/>
    <property type="chains" value="A/C=1-450"/>
</dbReference>
<dbReference type="PDB" id="5H7O">
    <property type="method" value="X-ray"/>
    <property type="resolution" value="2.80 A"/>
    <property type="chains" value="A/C=1-450"/>
</dbReference>
<dbReference type="PDB" id="5HNW">
    <property type="method" value="EM"/>
    <property type="resolution" value="6.60 A"/>
    <property type="chains" value="A=2-451"/>
</dbReference>
<dbReference type="PDB" id="5HNX">
    <property type="method" value="EM"/>
    <property type="resolution" value="6.60 A"/>
    <property type="chains" value="A=1-451"/>
</dbReference>
<dbReference type="PDB" id="5HNY">
    <property type="method" value="EM"/>
    <property type="resolution" value="6.30 A"/>
    <property type="chains" value="A=2-439"/>
</dbReference>
<dbReference type="PDB" id="5HNZ">
    <property type="method" value="EM"/>
    <property type="resolution" value="5.80 A"/>
    <property type="chains" value="A=1-451"/>
</dbReference>
<dbReference type="PDB" id="5JCB">
    <property type="method" value="X-ray"/>
    <property type="resolution" value="2.30 A"/>
    <property type="chains" value="A/C=1-451"/>
</dbReference>
<dbReference type="PDB" id="5JQG">
    <property type="method" value="X-ray"/>
    <property type="resolution" value="2.24 A"/>
    <property type="chains" value="A/C=1-451"/>
</dbReference>
<dbReference type="PDB" id="5KMG">
    <property type="method" value="EM"/>
    <property type="resolution" value="3.50 A"/>
    <property type="chains" value="A=1-441"/>
</dbReference>
<dbReference type="PDB" id="5SYC">
    <property type="method" value="EM"/>
    <property type="resolution" value="3.50 A"/>
    <property type="chains" value="A=1-437"/>
</dbReference>
<dbReference type="PDB" id="5SYE">
    <property type="method" value="EM"/>
    <property type="resolution" value="3.50 A"/>
    <property type="chains" value="A=1-437"/>
</dbReference>
<dbReference type="PDB" id="5SYF">
    <property type="method" value="EM"/>
    <property type="resolution" value="3.50 A"/>
    <property type="chains" value="A=1-437"/>
</dbReference>
<dbReference type="PDB" id="5SYG">
    <property type="method" value="EM"/>
    <property type="resolution" value="3.50 A"/>
    <property type="chains" value="A=1-437"/>
</dbReference>
<dbReference type="PDB" id="5XIW">
    <property type="method" value="X-ray"/>
    <property type="resolution" value="2.90 A"/>
    <property type="chains" value="A/C=1-451"/>
</dbReference>
<dbReference type="PDB" id="5XKE">
    <property type="method" value="X-ray"/>
    <property type="resolution" value="2.60 A"/>
    <property type="chains" value="A/C=1-451"/>
</dbReference>
<dbReference type="PDB" id="5XKF">
    <property type="method" value="X-ray"/>
    <property type="resolution" value="2.80 A"/>
    <property type="chains" value="A/C=1-451"/>
</dbReference>
<dbReference type="PDB" id="5XKG">
    <property type="method" value="X-ray"/>
    <property type="resolution" value="2.20 A"/>
    <property type="chains" value="A/C=1-451"/>
</dbReference>
<dbReference type="PDB" id="5XKH">
    <property type="method" value="X-ray"/>
    <property type="resolution" value="2.25 A"/>
    <property type="chains" value="A/C=1-451"/>
</dbReference>
<dbReference type="PDB" id="5XP3">
    <property type="method" value="X-ray"/>
    <property type="resolution" value="2.30 A"/>
    <property type="chains" value="A/C=1-451"/>
</dbReference>
<dbReference type="PDB" id="5YL2">
    <property type="method" value="X-ray"/>
    <property type="resolution" value="2.09 A"/>
    <property type="chains" value="A/C=1-451"/>
</dbReference>
<dbReference type="PDB" id="5YLJ">
    <property type="method" value="X-ray"/>
    <property type="resolution" value="2.70 A"/>
    <property type="chains" value="A/C=1-451"/>
</dbReference>
<dbReference type="PDB" id="5YLS">
    <property type="method" value="X-ray"/>
    <property type="resolution" value="3.00 A"/>
    <property type="chains" value="A/C=1-451"/>
</dbReference>
<dbReference type="PDB" id="5Z4U">
    <property type="method" value="X-ray"/>
    <property type="resolution" value="3.18 A"/>
    <property type="chains" value="A/C=1-450"/>
</dbReference>
<dbReference type="PDB" id="5ZXH">
    <property type="method" value="X-ray"/>
    <property type="resolution" value="2.80 A"/>
    <property type="chains" value="A/C=1-450"/>
</dbReference>
<dbReference type="PDB" id="6AGK">
    <property type="method" value="X-ray"/>
    <property type="resolution" value="2.80 A"/>
    <property type="chains" value="A/C=1-450"/>
</dbReference>
<dbReference type="PDB" id="6B0C">
    <property type="method" value="EM"/>
    <property type="resolution" value="3.51 A"/>
    <property type="chains" value="A/C=1-451"/>
</dbReference>
<dbReference type="PDB" id="6B0I">
    <property type="method" value="EM"/>
    <property type="resolution" value="3.78 A"/>
    <property type="chains" value="A=1-451"/>
</dbReference>
<dbReference type="PDB" id="6B0L">
    <property type="method" value="EM"/>
    <property type="resolution" value="3.98 A"/>
    <property type="chains" value="A=1-451"/>
</dbReference>
<dbReference type="PDB" id="6BJC">
    <property type="method" value="EM"/>
    <property type="resolution" value="3.30 A"/>
    <property type="chains" value="A/C/E/J/K/L=1-451"/>
</dbReference>
<dbReference type="PDB" id="6BR1">
    <property type="method" value="X-ray"/>
    <property type="resolution" value="2.30 A"/>
    <property type="chains" value="A/C=1-450"/>
</dbReference>
<dbReference type="PDB" id="6BRF">
    <property type="method" value="X-ray"/>
    <property type="resolution" value="2.50 A"/>
    <property type="chains" value="A/C=1-450"/>
</dbReference>
<dbReference type="PDB" id="6BRY">
    <property type="method" value="X-ray"/>
    <property type="resolution" value="2.70 A"/>
    <property type="chains" value="A/C=1-450"/>
</dbReference>
<dbReference type="PDB" id="6BS2">
    <property type="method" value="X-ray"/>
    <property type="resolution" value="2.65 A"/>
    <property type="chains" value="A/C=1-450"/>
</dbReference>
<dbReference type="PDB" id="6CVJ">
    <property type="method" value="EM"/>
    <property type="resolution" value="3.20 A"/>
    <property type="chains" value="A=1-451"/>
</dbReference>
<dbReference type="PDB" id="6CVN">
    <property type="method" value="EM"/>
    <property type="resolution" value="3.90 A"/>
    <property type="chains" value="B=1-451"/>
</dbReference>
<dbReference type="PDB" id="6D88">
    <property type="method" value="X-ray"/>
    <property type="resolution" value="2.85 A"/>
    <property type="chains" value="A/C=1-450"/>
</dbReference>
<dbReference type="PDB" id="6DPU">
    <property type="method" value="EM"/>
    <property type="resolution" value="3.10 A"/>
    <property type="chains" value="A/C/E/J/K/L=1-451"/>
</dbReference>
<dbReference type="PDB" id="6DPV">
    <property type="method" value="EM"/>
    <property type="resolution" value="3.30 A"/>
    <property type="chains" value="A/C/E/J/K/L=1-451"/>
</dbReference>
<dbReference type="PDB" id="6DPW">
    <property type="method" value="EM"/>
    <property type="resolution" value="3.50 A"/>
    <property type="chains" value="A/C/E/J/K/L=1-451"/>
</dbReference>
<dbReference type="PDB" id="6EG5">
    <property type="method" value="X-ray"/>
    <property type="resolution" value="2.45 A"/>
    <property type="chains" value="A/C=1-450"/>
</dbReference>
<dbReference type="PDB" id="6EVW">
    <property type="method" value="EM"/>
    <property type="resolution" value="4.40 A"/>
    <property type="chains" value="A/C/E/J/K/L=1-438"/>
</dbReference>
<dbReference type="PDB" id="6EVX">
    <property type="method" value="EM"/>
    <property type="resolution" value="4.20 A"/>
    <property type="chains" value="A/C/E/J/K/L=1-451"/>
</dbReference>
<dbReference type="PDB" id="6EVY">
    <property type="method" value="EM"/>
    <property type="resolution" value="4.40 A"/>
    <property type="chains" value="A/C/E/J/K/L=1-451"/>
</dbReference>
<dbReference type="PDB" id="6EVZ">
    <property type="method" value="EM"/>
    <property type="resolution" value="3.80 A"/>
    <property type="chains" value="A/C/E/J/K/L=1-451"/>
</dbReference>
<dbReference type="PDB" id="6EW0">
    <property type="method" value="EM"/>
    <property type="resolution" value="3.80 A"/>
    <property type="chains" value="A/C/E/J/K/L=1-451"/>
</dbReference>
<dbReference type="PDB" id="6JCJ">
    <property type="method" value="X-ray"/>
    <property type="resolution" value="2.50 A"/>
    <property type="chains" value="A/C=1-450"/>
</dbReference>
<dbReference type="PDB" id="6KPP">
    <property type="method" value="X-ray"/>
    <property type="resolution" value="2.75 A"/>
    <property type="chains" value="A/C=1-450"/>
</dbReference>
<dbReference type="PDB" id="6LS4">
    <property type="method" value="X-ray"/>
    <property type="resolution" value="2.40 A"/>
    <property type="chains" value="A/C=1-451"/>
</dbReference>
<dbReference type="PDB" id="6LSM">
    <property type="method" value="X-ray"/>
    <property type="resolution" value="2.75 A"/>
    <property type="chains" value="A/C=1-450"/>
</dbReference>
<dbReference type="PDB" id="6LSN">
    <property type="method" value="X-ray"/>
    <property type="resolution" value="2.44 A"/>
    <property type="chains" value="A/C=1-450"/>
</dbReference>
<dbReference type="PDB" id="6N47">
    <property type="method" value="X-ray"/>
    <property type="resolution" value="2.60 A"/>
    <property type="chains" value="A/C=1-450"/>
</dbReference>
<dbReference type="PDB" id="6NNG">
    <property type="method" value="X-ray"/>
    <property type="resolution" value="2.40 A"/>
    <property type="chains" value="A/C=1-450"/>
</dbReference>
<dbReference type="PDB" id="6O2Q">
    <property type="method" value="EM"/>
    <property type="resolution" value="3.70 A"/>
    <property type="chains" value="A/C/E/J/K/L=1-451"/>
</dbReference>
<dbReference type="PDB" id="6O2R">
    <property type="method" value="EM"/>
    <property type="resolution" value="3.30 A"/>
    <property type="chains" value="A/C/E/J/K/L=1-451"/>
</dbReference>
<dbReference type="PDB" id="6O2S">
    <property type="method" value="EM"/>
    <property type="resolution" value="4.00 A"/>
    <property type="chains" value="1A/1B/1C/1D/1E/1F/1G/1I/1J/1K/1L/1M/1N/2A/2B/2C/2D/2E/2F/2G/2I/2J/2K/2L/2M/2N/3A/3B/3C/3D=1-451"/>
</dbReference>
<dbReference type="PDB" id="6O2T">
    <property type="method" value="EM"/>
    <property type="resolution" value="4.10 A"/>
    <property type="chains" value="1A/1B/1C/1D/1E/1F/1G/1I/1J/1K/1L/1M/1N/2A/2B/2C/2D/2E/2F/2G/2I/2J/2K/2L/2M/2N/3A/3B/3C/3D=1-451"/>
</dbReference>
<dbReference type="PDB" id="6O5M">
    <property type="method" value="X-ray"/>
    <property type="resolution" value="2.30 A"/>
    <property type="chains" value="A/C=1-450"/>
</dbReference>
<dbReference type="PDB" id="6O5N">
    <property type="method" value="X-ray"/>
    <property type="resolution" value="3.00 A"/>
    <property type="chains" value="A/C=1-450"/>
</dbReference>
<dbReference type="PDB" id="6O61">
    <property type="method" value="X-ray"/>
    <property type="resolution" value="2.60 A"/>
    <property type="chains" value="A/C=1-450"/>
</dbReference>
<dbReference type="PDB" id="6PC4">
    <property type="method" value="X-ray"/>
    <property type="resolution" value="2.60 A"/>
    <property type="chains" value="A/C=1-450"/>
</dbReference>
<dbReference type="PDB" id="6RZA">
    <property type="method" value="EM"/>
    <property type="resolution" value="5.40 A"/>
    <property type="chains" value="A/C=1-437"/>
</dbReference>
<dbReference type="PDB" id="6RZB">
    <property type="method" value="EM"/>
    <property type="resolution" value="5.00 A"/>
    <property type="chains" value="A=1-437"/>
</dbReference>
<dbReference type="PDB" id="6TA3">
    <property type="method" value="EM"/>
    <property type="resolution" value="3.80 A"/>
    <property type="chains" value="A=1-438"/>
</dbReference>
<dbReference type="PDB" id="6TA4">
    <property type="method" value="EM"/>
    <property type="resolution" value="6.10 A"/>
    <property type="chains" value="A=1-438"/>
</dbReference>
<dbReference type="PDB" id="6TIW">
    <property type="method" value="EM"/>
    <property type="resolution" value="1.09 A"/>
    <property type="chains" value="A=1-438"/>
</dbReference>
<dbReference type="PDB" id="6WWE">
    <property type="method" value="EM"/>
    <property type="resolution" value="3.90 A"/>
    <property type="chains" value="A=1-451"/>
</dbReference>
<dbReference type="PDB" id="6WWF">
    <property type="method" value="EM"/>
    <property type="resolution" value="3.30 A"/>
    <property type="chains" value="A=1-451"/>
</dbReference>
<dbReference type="PDB" id="6WWG">
    <property type="method" value="EM"/>
    <property type="resolution" value="2.90 A"/>
    <property type="chains" value="A/E=1-451"/>
</dbReference>
<dbReference type="PDB" id="6WWH">
    <property type="method" value="EM"/>
    <property type="resolution" value="3.80 A"/>
    <property type="chains" value="A/E=1-451"/>
</dbReference>
<dbReference type="PDB" id="6WWI">
    <property type="method" value="EM"/>
    <property type="resolution" value="3.60 A"/>
    <property type="chains" value="A=1-451"/>
</dbReference>
<dbReference type="PDB" id="6WWJ">
    <property type="method" value="EM"/>
    <property type="resolution" value="3.40 A"/>
    <property type="chains" value="A=1-451"/>
</dbReference>
<dbReference type="PDB" id="6WWK">
    <property type="method" value="EM"/>
    <property type="resolution" value="3.00 A"/>
    <property type="chains" value="A/E=1-451"/>
</dbReference>
<dbReference type="PDB" id="6WWL">
    <property type="method" value="EM"/>
    <property type="resolution" value="3.10 A"/>
    <property type="chains" value="A/E=1-451"/>
</dbReference>
<dbReference type="PDB" id="6WWM">
    <property type="method" value="EM"/>
    <property type="resolution" value="2.80 A"/>
    <property type="chains" value="A=1-451"/>
</dbReference>
<dbReference type="PDB" id="6WWN">
    <property type="method" value="EM"/>
    <property type="resolution" value="3.50 A"/>
    <property type="chains" value="A=1-451"/>
</dbReference>
<dbReference type="PDB" id="6WWO">
    <property type="method" value="EM"/>
    <property type="resolution" value="2.80 A"/>
    <property type="chains" value="A=1-451"/>
</dbReference>
<dbReference type="PDB" id="6WWP">
    <property type="method" value="EM"/>
    <property type="resolution" value="3.10 A"/>
    <property type="chains" value="A=1-451"/>
</dbReference>
<dbReference type="PDB" id="6WWQ">
    <property type="method" value="EM"/>
    <property type="resolution" value="3.00 A"/>
    <property type="chains" value="A=1-451"/>
</dbReference>
<dbReference type="PDB" id="6WWR">
    <property type="method" value="EM"/>
    <property type="resolution" value="2.70 A"/>
    <property type="chains" value="A=1-451"/>
</dbReference>
<dbReference type="PDB" id="6WWS">
    <property type="method" value="EM"/>
    <property type="resolution" value="2.70 A"/>
    <property type="chains" value="A=1-451"/>
</dbReference>
<dbReference type="PDB" id="6WWT">
    <property type="method" value="EM"/>
    <property type="resolution" value="3.20 A"/>
    <property type="chains" value="A=1-451"/>
</dbReference>
<dbReference type="PDB" id="6WWU">
    <property type="method" value="EM"/>
    <property type="resolution" value="2.70 A"/>
    <property type="chains" value="A=1-451"/>
</dbReference>
<dbReference type="PDB" id="6WWV">
    <property type="method" value="EM"/>
    <property type="resolution" value="3.10 A"/>
    <property type="chains" value="A=1-451"/>
</dbReference>
<dbReference type="PDB" id="6X1C">
    <property type="method" value="X-ray"/>
    <property type="resolution" value="2.90 A"/>
    <property type="chains" value="A/C=1-450"/>
</dbReference>
<dbReference type="PDB" id="6X1E">
    <property type="method" value="X-ray"/>
    <property type="resolution" value="2.90 A"/>
    <property type="chains" value="A/C=1-450"/>
</dbReference>
<dbReference type="PDB" id="6X1F">
    <property type="method" value="X-ray"/>
    <property type="resolution" value="2.70 A"/>
    <property type="chains" value="A/C=1-450"/>
</dbReference>
<dbReference type="PDB" id="6XER">
    <property type="method" value="X-ray"/>
    <property type="resolution" value="2.50 A"/>
    <property type="chains" value="A/C=1-438"/>
</dbReference>
<dbReference type="PDB" id="6XES">
    <property type="method" value="X-ray"/>
    <property type="resolution" value="2.32 A"/>
    <property type="chains" value="A/C=1-438"/>
</dbReference>
<dbReference type="PDB" id="6XET">
    <property type="method" value="X-ray"/>
    <property type="resolution" value="2.60 A"/>
    <property type="chains" value="A/C=1-438"/>
</dbReference>
<dbReference type="PDB" id="6Y4M">
    <property type="method" value="X-ray"/>
    <property type="resolution" value="3.34 A"/>
    <property type="chains" value="A/C=1-451"/>
</dbReference>
<dbReference type="PDB" id="6Y4N">
    <property type="method" value="X-ray"/>
    <property type="resolution" value="2.85 A"/>
    <property type="chains" value="A/C=1-451"/>
</dbReference>
<dbReference type="PDB" id="6ZPI">
    <property type="method" value="EM"/>
    <property type="resolution" value="4.50 A"/>
    <property type="chains" value="A=1-437"/>
</dbReference>
<dbReference type="PDB" id="7CBZ">
    <property type="method" value="X-ray"/>
    <property type="resolution" value="2.61 A"/>
    <property type="chains" value="A/C=1-451"/>
</dbReference>
<dbReference type="PDB" id="7CDA">
    <property type="method" value="X-ray"/>
    <property type="resolution" value="2.66 A"/>
    <property type="chains" value="A/C=1-450"/>
</dbReference>
<dbReference type="PDB" id="7CE6">
    <property type="method" value="X-ray"/>
    <property type="resolution" value="2.69 A"/>
    <property type="chains" value="A/C=1-450"/>
</dbReference>
<dbReference type="PDB" id="7CE8">
    <property type="method" value="X-ray"/>
    <property type="resolution" value="2.73 A"/>
    <property type="chains" value="A/C=1-450"/>
</dbReference>
<dbReference type="PDB" id="7CEK">
    <property type="method" value="X-ray"/>
    <property type="resolution" value="2.70 A"/>
    <property type="chains" value="A/C=1-450"/>
</dbReference>
<dbReference type="PDB" id="7CLD">
    <property type="method" value="X-ray"/>
    <property type="resolution" value="2.61 A"/>
    <property type="chains" value="A/C=1-450"/>
</dbReference>
<dbReference type="PDB" id="7CNM">
    <property type="method" value="X-ray"/>
    <property type="resolution" value="2.44 A"/>
    <property type="chains" value="A/C=1-451"/>
</dbReference>
<dbReference type="PDB" id="7CNN">
    <property type="method" value="X-ray"/>
    <property type="resolution" value="2.50 A"/>
    <property type="chains" value="A/C=1-451"/>
</dbReference>
<dbReference type="PDB" id="7CNO">
    <property type="method" value="X-ray"/>
    <property type="resolution" value="2.50 A"/>
    <property type="chains" value="A/C=1-451"/>
</dbReference>
<dbReference type="PDB" id="7DAD">
    <property type="method" value="X-ray"/>
    <property type="resolution" value="2.85 A"/>
    <property type="chains" value="A/C=1-451"/>
</dbReference>
<dbReference type="PDB" id="7DAE">
    <property type="method" value="X-ray"/>
    <property type="resolution" value="2.39 A"/>
    <property type="chains" value="A/C=1-451"/>
</dbReference>
<dbReference type="PDB" id="7DAF">
    <property type="method" value="X-ray"/>
    <property type="resolution" value="2.40 A"/>
    <property type="chains" value="A/C=1-451"/>
</dbReference>
<dbReference type="PDB" id="7DB9">
    <property type="method" value="X-ray"/>
    <property type="resolution" value="2.85 A"/>
    <property type="chains" value="A/C=1-451"/>
</dbReference>
<dbReference type="PDB" id="7DBA">
    <property type="method" value="X-ray"/>
    <property type="resolution" value="2.46 A"/>
    <property type="chains" value="A/C=1-451"/>
</dbReference>
<dbReference type="PDB" id="7DBB">
    <property type="method" value="X-ray"/>
    <property type="resolution" value="2.81 A"/>
    <property type="chains" value="A/C=1-451"/>
</dbReference>
<dbReference type="PDB" id="7DBC">
    <property type="method" value="X-ray"/>
    <property type="resolution" value="2.40 A"/>
    <property type="chains" value="A/C=1-451"/>
</dbReference>
<dbReference type="PDB" id="7DBD">
    <property type="method" value="X-ray"/>
    <property type="resolution" value="3.09 A"/>
    <property type="chains" value="A/C=1-451"/>
</dbReference>
<dbReference type="PDB" id="7DMZ">
    <property type="method" value="EM"/>
    <property type="resolution" value="4.30 A"/>
    <property type="chains" value="A/B/D=1-451"/>
</dbReference>
<dbReference type="PDB" id="7DN0">
    <property type="method" value="EM"/>
    <property type="resolution" value="3.50 A"/>
    <property type="chains" value="A/B/C/D=1-451"/>
</dbReference>
<dbReference type="PDB" id="7DP8">
    <property type="method" value="X-ray"/>
    <property type="resolution" value="2.45 A"/>
    <property type="chains" value="A/C=1-450"/>
</dbReference>
<dbReference type="PDB" id="7EMJ">
    <property type="method" value="X-ray"/>
    <property type="resolution" value="2.33 A"/>
    <property type="chains" value="A/C=1-451"/>
</dbReference>
<dbReference type="PDB" id="7EN3">
    <property type="method" value="X-ray"/>
    <property type="resolution" value="2.64 A"/>
    <property type="chains" value="A/C=1-451"/>
</dbReference>
<dbReference type="PDB" id="7EXC">
    <property type="method" value="X-ray"/>
    <property type="resolution" value="2.39 A"/>
    <property type="chains" value="A/C=1-451"/>
</dbReference>
<dbReference type="PDB" id="7L05">
    <property type="method" value="X-ray"/>
    <property type="resolution" value="2.21 A"/>
    <property type="chains" value="A/C=1-451"/>
</dbReference>
<dbReference type="PDB" id="7LVQ">
    <property type="method" value="EM"/>
    <property type="resolution" value="2.90 A"/>
    <property type="chains" value="A=1-451"/>
</dbReference>
<dbReference type="PDB" id="7LVR">
    <property type="method" value="EM"/>
    <property type="resolution" value="2.90 A"/>
    <property type="chains" value="A=1-451"/>
</dbReference>
<dbReference type="PDB" id="7LZ7">
    <property type="method" value="X-ray"/>
    <property type="resolution" value="2.80 A"/>
    <property type="chains" value="A/C=1-450"/>
</dbReference>
<dbReference type="PDB" id="7LZ8">
    <property type="method" value="X-ray"/>
    <property type="resolution" value="2.92 A"/>
    <property type="chains" value="A/C=1-450"/>
</dbReference>
<dbReference type="PDB" id="7NB8">
    <property type="method" value="EM"/>
    <property type="resolution" value="4.40 A"/>
    <property type="chains" value="A=1-451"/>
</dbReference>
<dbReference type="PDB" id="7NBA">
    <property type="method" value="EM"/>
    <property type="resolution" value="4.00 A"/>
    <property type="chains" value="A=1-451"/>
</dbReference>
<dbReference type="PDB" id="7PQC">
    <property type="method" value="EM"/>
    <property type="resolution" value="4.10 A"/>
    <property type="chains" value="B/D/F/H/J/L/N=1-451"/>
</dbReference>
<dbReference type="PDB" id="7PQP">
    <property type="method" value="EM"/>
    <property type="resolution" value="4.10 A"/>
    <property type="chains" value="B/D/F/H/J/L/N=1-451"/>
</dbReference>
<dbReference type="PDB" id="7RS6">
    <property type="method" value="EM"/>
    <property type="resolution" value="4.10 A"/>
    <property type="chains" value="A/C/E/G/I/L/N/P/R=1-451"/>
</dbReference>
<dbReference type="PDB" id="7SGS">
    <property type="method" value="EM"/>
    <property type="resolution" value="3.30 A"/>
    <property type="chains" value="B/D=1-451"/>
</dbReference>
<dbReference type="PDB" id="7TQX">
    <property type="method" value="EM"/>
    <property type="resolution" value="2.80 A"/>
    <property type="chains" value="A=1-451"/>
</dbReference>
<dbReference type="PDB" id="7TQY">
    <property type="method" value="EM"/>
    <property type="resolution" value="2.60 A"/>
    <property type="chains" value="A=1-451"/>
</dbReference>
<dbReference type="PDB" id="7TQZ">
    <property type="method" value="EM"/>
    <property type="resolution" value="2.70 A"/>
    <property type="chains" value="A=1-451"/>
</dbReference>
<dbReference type="PDB" id="7TR0">
    <property type="method" value="EM"/>
    <property type="resolution" value="2.70 A"/>
    <property type="chains" value="A=1-451"/>
</dbReference>
<dbReference type="PDB" id="7TR1">
    <property type="method" value="EM"/>
    <property type="resolution" value="3.10 A"/>
    <property type="chains" value="A=1-451"/>
</dbReference>
<dbReference type="PDB" id="7TR2">
    <property type="method" value="EM"/>
    <property type="resolution" value="3.00 A"/>
    <property type="chains" value="A=1-451"/>
</dbReference>
<dbReference type="PDB" id="7TR3">
    <property type="method" value="EM"/>
    <property type="resolution" value="3.90 A"/>
    <property type="chains" value="A=1-451"/>
</dbReference>
<dbReference type="PDB" id="7TTD">
    <property type="method" value="X-ray"/>
    <property type="resolution" value="2.27 A"/>
    <property type="chains" value="A/C=1-438"/>
</dbReference>
<dbReference type="PDB" id="7TTE">
    <property type="method" value="X-ray"/>
    <property type="resolution" value="2.70 A"/>
    <property type="chains" value="A/C=1-438"/>
</dbReference>
<dbReference type="PDB" id="7TTF">
    <property type="method" value="X-ray"/>
    <property type="resolution" value="2.10 A"/>
    <property type="chains" value="A/C=1-438"/>
</dbReference>
<dbReference type="PDB" id="7XQX">
    <property type="method" value="X-ray"/>
    <property type="resolution" value="3.36 A"/>
    <property type="chains" value="A/C=1-450"/>
</dbReference>
<dbReference type="PDB" id="7XQY">
    <property type="method" value="X-ray"/>
    <property type="resolution" value="2.35 A"/>
    <property type="chains" value="A/C=1-450"/>
</dbReference>
<dbReference type="PDB" id="7XR0">
    <property type="method" value="X-ray"/>
    <property type="resolution" value="2.70 A"/>
    <property type="chains" value="A/C=1-450"/>
</dbReference>
<dbReference type="PDB" id="7XR1">
    <property type="method" value="X-ray"/>
    <property type="resolution" value="2.81 A"/>
    <property type="chains" value="A/C=1-450"/>
</dbReference>
<dbReference type="PDB" id="7YHN">
    <property type="method" value="X-ray"/>
    <property type="resolution" value="2.60 A"/>
    <property type="chains" value="A/C=1-451"/>
</dbReference>
<dbReference type="PDB" id="7YSN">
    <property type="method" value="EM"/>
    <property type="resolution" value="3.50 A"/>
    <property type="chains" value="A=1-451"/>
</dbReference>
<dbReference type="PDB" id="7YSO">
    <property type="method" value="EM"/>
    <property type="resolution" value="3.60 A"/>
    <property type="chains" value="A=1-451"/>
</dbReference>
<dbReference type="PDB" id="7YSP">
    <property type="method" value="EM"/>
    <property type="resolution" value="3.90 A"/>
    <property type="chains" value="A=1-451"/>
</dbReference>
<dbReference type="PDB" id="7Z2A">
    <property type="method" value="EM"/>
    <property type="resolution" value="4.30 A"/>
    <property type="chains" value="A=1-437"/>
</dbReference>
<dbReference type="PDB" id="7Z2B">
    <property type="method" value="EM"/>
    <property type="resolution" value="3.30 A"/>
    <property type="chains" value="A=1-437"/>
</dbReference>
<dbReference type="PDB" id="7Z2C">
    <property type="method" value="EM"/>
    <property type="resolution" value="4.10 A"/>
    <property type="chains" value="A=1-437"/>
</dbReference>
<dbReference type="PDB" id="8DIQ">
    <property type="method" value="X-ray"/>
    <property type="resolution" value="2.40 A"/>
    <property type="chains" value="A/C=1-450"/>
</dbReference>
<dbReference type="PDB" id="8F18">
    <property type="method" value="EM"/>
    <property type="resolution" value="3.20 A"/>
    <property type="chains" value="A=1-451"/>
</dbReference>
<dbReference type="PDB" id="8F1A">
    <property type="method" value="EM"/>
    <property type="resolution" value="3.10 A"/>
    <property type="chains" value="A=1-451"/>
</dbReference>
<dbReference type="PDB" id="8JJB">
    <property type="method" value="X-ray"/>
    <property type="resolution" value="2.68 A"/>
    <property type="chains" value="A/C=1-451"/>
</dbReference>
<dbReference type="PDB" id="8JJC">
    <property type="method" value="X-ray"/>
    <property type="resolution" value="2.76 A"/>
    <property type="chains" value="A/C=1-451"/>
</dbReference>
<dbReference type="PDB" id="8RC1">
    <property type="method" value="EM"/>
    <property type="resolution" value="3.70 A"/>
    <property type="chains" value="A/C=1-451"/>
</dbReference>
<dbReference type="PDB" id="8RHB">
    <property type="method" value="EM"/>
    <property type="resolution" value="3.00 A"/>
    <property type="chains" value="A=1-451"/>
</dbReference>
<dbReference type="PDB" id="8RHH">
    <property type="method" value="EM"/>
    <property type="resolution" value="3.00 A"/>
    <property type="chains" value="A=1-451"/>
</dbReference>
<dbReference type="PDB" id="8RIK">
    <property type="method" value="EM"/>
    <property type="resolution" value="3.60 A"/>
    <property type="chains" value="A=1-451"/>
</dbReference>
<dbReference type="PDB" id="8RIZ">
    <property type="method" value="EM"/>
    <property type="resolution" value="3.60 A"/>
    <property type="chains" value="A=1-451"/>
</dbReference>
<dbReference type="PDB" id="8UTN">
    <property type="method" value="EM"/>
    <property type="resolution" value="3.10 A"/>
    <property type="chains" value="A/E/S=1-451"/>
</dbReference>
<dbReference type="PDB" id="8UTO">
    <property type="method" value="EM"/>
    <property type="resolution" value="3.20 A"/>
    <property type="chains" value="A/E/S=1-451"/>
</dbReference>
<dbReference type="PDB" id="8UTP">
    <property type="method" value="EM"/>
    <property type="resolution" value="3.20 A"/>
    <property type="chains" value="A/E/S=1-451"/>
</dbReference>
<dbReference type="PDB" id="8UTQ">
    <property type="method" value="EM"/>
    <property type="resolution" value="3.10 A"/>
    <property type="chains" value="A/E=1-451"/>
</dbReference>
<dbReference type="PDB" id="8UTR">
    <property type="method" value="EM"/>
    <property type="resolution" value="3.30 A"/>
    <property type="chains" value="A=1-451"/>
</dbReference>
<dbReference type="PDB" id="8UTS">
    <property type="method" value="EM"/>
    <property type="resolution" value="2.70 A"/>
    <property type="chains" value="A=1-451"/>
</dbReference>
<dbReference type="PDB" id="8UTT">
    <property type="method" value="EM"/>
    <property type="resolution" value="3.10 A"/>
    <property type="chains" value="A/E/S=1-451"/>
</dbReference>
<dbReference type="PDB" id="8UTU">
    <property type="method" value="EM"/>
    <property type="resolution" value="3.00 A"/>
    <property type="chains" value="A/E=1-451"/>
</dbReference>
<dbReference type="PDB" id="8UTV">
    <property type="method" value="EM"/>
    <property type="resolution" value="3.00 A"/>
    <property type="chains" value="A/E=1-451"/>
</dbReference>
<dbReference type="PDB" id="8UTW">
    <property type="method" value="EM"/>
    <property type="resolution" value="3.40 A"/>
    <property type="chains" value="A=1-451"/>
</dbReference>
<dbReference type="PDB" id="8UTY">
    <property type="method" value="EM"/>
    <property type="resolution" value="3.30 A"/>
    <property type="chains" value="A/E/S=1-451"/>
</dbReference>
<dbReference type="PDB" id="8V4K">
    <property type="method" value="EM"/>
    <property type="resolution" value="3.10 A"/>
    <property type="chains" value="A/C=1-451"/>
</dbReference>
<dbReference type="PDB" id="8V4L">
    <property type="method" value="EM"/>
    <property type="resolution" value="2.90 A"/>
    <property type="chains" value="A/C=1-451"/>
</dbReference>
<dbReference type="PDB" id="8V4M">
    <property type="method" value="EM"/>
    <property type="resolution" value="3.00 A"/>
    <property type="chains" value="A/C=1-451"/>
</dbReference>
<dbReference type="PDB" id="8WMO">
    <property type="method" value="X-ray"/>
    <property type="resolution" value="2.89 A"/>
    <property type="chains" value="A/C=1-440"/>
</dbReference>
<dbReference type="PDB" id="8WMU">
    <property type="method" value="X-ray"/>
    <property type="resolution" value="2.70 A"/>
    <property type="chains" value="A/C=1-440"/>
</dbReference>
<dbReference type="PDB" id="8YEM">
    <property type="method" value="X-ray"/>
    <property type="resolution" value="2.74 A"/>
    <property type="chains" value="A/C=1-440"/>
</dbReference>
<dbReference type="PDB" id="8YER">
    <property type="method" value="X-ray"/>
    <property type="resolution" value="2.71 A"/>
    <property type="chains" value="A/C=1-440"/>
</dbReference>
<dbReference type="PDB" id="8YEU">
    <property type="method" value="X-ray"/>
    <property type="resolution" value="3.05 A"/>
    <property type="chains" value="A/C=1-440"/>
</dbReference>
<dbReference type="PDB" id="8YTX">
    <property type="method" value="X-ray"/>
    <property type="resolution" value="2.53 A"/>
    <property type="chains" value="A/C=1-440"/>
</dbReference>
<dbReference type="PDB" id="8YU9">
    <property type="method" value="X-ray"/>
    <property type="resolution" value="3.25 A"/>
    <property type="chains" value="A/C=1-440"/>
</dbReference>
<dbReference type="PDB" id="8YUA">
    <property type="method" value="X-ray"/>
    <property type="resolution" value="2.37 A"/>
    <property type="chains" value="A/C=1-440"/>
</dbReference>
<dbReference type="PDB" id="8ZB8">
    <property type="method" value="X-ray"/>
    <property type="resolution" value="2.94 A"/>
    <property type="chains" value="A/C=1-450"/>
</dbReference>
<dbReference type="PDB" id="9DUQ">
    <property type="method" value="EM"/>
    <property type="resolution" value="2.80 A"/>
    <property type="chains" value="A/C/E/G/I/K/M/O/Q=1-439"/>
</dbReference>
<dbReference type="PDB" id="9GNQ">
    <property type="method" value="EM"/>
    <property type="resolution" value="2.90 A"/>
    <property type="chains" value="A=1-451"/>
</dbReference>
<dbReference type="PDB" id="9IM5">
    <property type="method" value="X-ray"/>
    <property type="resolution" value="2.86 A"/>
    <property type="chains" value="A/C=1-451"/>
</dbReference>
<dbReference type="PDB" id="9IMO">
    <property type="method" value="X-ray"/>
    <property type="resolution" value="2.75 A"/>
    <property type="chains" value="A/C=1-451"/>
</dbReference>
<dbReference type="PDBsum" id="3J8X"/>
<dbReference type="PDBsum" id="3J8Y"/>
<dbReference type="PDBsum" id="3JAK"/>
<dbReference type="PDBsum" id="3JAL"/>
<dbReference type="PDBsum" id="3JAR"/>
<dbReference type="PDBsum" id="3JAS"/>
<dbReference type="PDBsum" id="3JAT"/>
<dbReference type="PDBsum" id="3JAW"/>
<dbReference type="PDBsum" id="4ZHQ"/>
<dbReference type="PDBsum" id="4ZI7"/>
<dbReference type="PDBsum" id="4ZOL"/>
<dbReference type="PDBsum" id="5CA0"/>
<dbReference type="PDBsum" id="5EZY"/>
<dbReference type="PDBsum" id="5FNV"/>
<dbReference type="PDBsum" id="5H74"/>
<dbReference type="PDBsum" id="5H7O"/>
<dbReference type="PDBsum" id="5HNW"/>
<dbReference type="PDBsum" id="5HNX"/>
<dbReference type="PDBsum" id="5HNY"/>
<dbReference type="PDBsum" id="5HNZ"/>
<dbReference type="PDBsum" id="5JCB"/>
<dbReference type="PDBsum" id="5JQG"/>
<dbReference type="PDBsum" id="5KMG"/>
<dbReference type="PDBsum" id="5SYC"/>
<dbReference type="PDBsum" id="5SYE"/>
<dbReference type="PDBsum" id="5SYF"/>
<dbReference type="PDBsum" id="5SYG"/>
<dbReference type="PDBsum" id="5XIW"/>
<dbReference type="PDBsum" id="5XKE"/>
<dbReference type="PDBsum" id="5XKF"/>
<dbReference type="PDBsum" id="5XKG"/>
<dbReference type="PDBsum" id="5XKH"/>
<dbReference type="PDBsum" id="5XP3"/>
<dbReference type="PDBsum" id="5YL2"/>
<dbReference type="PDBsum" id="5YLJ"/>
<dbReference type="PDBsum" id="5YLS"/>
<dbReference type="PDBsum" id="5Z4U"/>
<dbReference type="PDBsum" id="5ZXH"/>
<dbReference type="PDBsum" id="6AGK"/>
<dbReference type="PDBsum" id="6B0C"/>
<dbReference type="PDBsum" id="6B0I"/>
<dbReference type="PDBsum" id="6B0L"/>
<dbReference type="PDBsum" id="6BJC"/>
<dbReference type="PDBsum" id="6BR1"/>
<dbReference type="PDBsum" id="6BRF"/>
<dbReference type="PDBsum" id="6BRY"/>
<dbReference type="PDBsum" id="6BS2"/>
<dbReference type="PDBsum" id="6CVJ"/>
<dbReference type="PDBsum" id="6CVN"/>
<dbReference type="PDBsum" id="6D88"/>
<dbReference type="PDBsum" id="6DPU"/>
<dbReference type="PDBsum" id="6DPV"/>
<dbReference type="PDBsum" id="6DPW"/>
<dbReference type="PDBsum" id="6EG5"/>
<dbReference type="PDBsum" id="6EVW"/>
<dbReference type="PDBsum" id="6EVX"/>
<dbReference type="PDBsum" id="6EVY"/>
<dbReference type="PDBsum" id="6EVZ"/>
<dbReference type="PDBsum" id="6EW0"/>
<dbReference type="PDBsum" id="6JCJ"/>
<dbReference type="PDBsum" id="6KPP"/>
<dbReference type="PDBsum" id="6LS4"/>
<dbReference type="PDBsum" id="6LSM"/>
<dbReference type="PDBsum" id="6LSN"/>
<dbReference type="PDBsum" id="6N47"/>
<dbReference type="PDBsum" id="6NNG"/>
<dbReference type="PDBsum" id="6O2Q"/>
<dbReference type="PDBsum" id="6O2R"/>
<dbReference type="PDBsum" id="6O2S"/>
<dbReference type="PDBsum" id="6O2T"/>
<dbReference type="PDBsum" id="6O5M"/>
<dbReference type="PDBsum" id="6O5N"/>
<dbReference type="PDBsum" id="6O61"/>
<dbReference type="PDBsum" id="6PC4"/>
<dbReference type="PDBsum" id="6RZA"/>
<dbReference type="PDBsum" id="6RZB"/>
<dbReference type="PDBsum" id="6TA3"/>
<dbReference type="PDBsum" id="6TA4"/>
<dbReference type="PDBsum" id="6TIW"/>
<dbReference type="PDBsum" id="6WWE"/>
<dbReference type="PDBsum" id="6WWF"/>
<dbReference type="PDBsum" id="6WWG"/>
<dbReference type="PDBsum" id="6WWH"/>
<dbReference type="PDBsum" id="6WWI"/>
<dbReference type="PDBsum" id="6WWJ"/>
<dbReference type="PDBsum" id="6WWK"/>
<dbReference type="PDBsum" id="6WWL"/>
<dbReference type="PDBsum" id="6WWM"/>
<dbReference type="PDBsum" id="6WWN"/>
<dbReference type="PDBsum" id="6WWO"/>
<dbReference type="PDBsum" id="6WWP"/>
<dbReference type="PDBsum" id="6WWQ"/>
<dbReference type="PDBsum" id="6WWR"/>
<dbReference type="PDBsum" id="6WWS"/>
<dbReference type="PDBsum" id="6WWT"/>
<dbReference type="PDBsum" id="6WWU"/>
<dbReference type="PDBsum" id="6WWV"/>
<dbReference type="PDBsum" id="6X1C"/>
<dbReference type="PDBsum" id="6X1E"/>
<dbReference type="PDBsum" id="6X1F"/>
<dbReference type="PDBsum" id="6XER"/>
<dbReference type="PDBsum" id="6XES"/>
<dbReference type="PDBsum" id="6XET"/>
<dbReference type="PDBsum" id="6Y4M"/>
<dbReference type="PDBsum" id="6Y4N"/>
<dbReference type="PDBsum" id="6ZPI"/>
<dbReference type="PDBsum" id="7CBZ"/>
<dbReference type="PDBsum" id="7CDA"/>
<dbReference type="PDBsum" id="7CE6"/>
<dbReference type="PDBsum" id="7CE8"/>
<dbReference type="PDBsum" id="7CEK"/>
<dbReference type="PDBsum" id="7CLD"/>
<dbReference type="PDBsum" id="7CNM"/>
<dbReference type="PDBsum" id="7CNN"/>
<dbReference type="PDBsum" id="7CNO"/>
<dbReference type="PDBsum" id="7DAD"/>
<dbReference type="PDBsum" id="7DAE"/>
<dbReference type="PDBsum" id="7DAF"/>
<dbReference type="PDBsum" id="7DB9"/>
<dbReference type="PDBsum" id="7DBA"/>
<dbReference type="PDBsum" id="7DBB"/>
<dbReference type="PDBsum" id="7DBC"/>
<dbReference type="PDBsum" id="7DBD"/>
<dbReference type="PDBsum" id="7DMZ"/>
<dbReference type="PDBsum" id="7DN0"/>
<dbReference type="PDBsum" id="7DP8"/>
<dbReference type="PDBsum" id="7EMJ"/>
<dbReference type="PDBsum" id="7EN3"/>
<dbReference type="PDBsum" id="7EXC"/>
<dbReference type="PDBsum" id="7L05"/>
<dbReference type="PDBsum" id="7LVQ"/>
<dbReference type="PDBsum" id="7LVR"/>
<dbReference type="PDBsum" id="7LZ7"/>
<dbReference type="PDBsum" id="7LZ8"/>
<dbReference type="PDBsum" id="7NB8"/>
<dbReference type="PDBsum" id="7NBA"/>
<dbReference type="PDBsum" id="7PQC"/>
<dbReference type="PDBsum" id="7PQP"/>
<dbReference type="PDBsum" id="7RS6"/>
<dbReference type="PDBsum" id="7SGS"/>
<dbReference type="PDBsum" id="7TQX"/>
<dbReference type="PDBsum" id="7TQY"/>
<dbReference type="PDBsum" id="7TQZ"/>
<dbReference type="PDBsum" id="7TR0"/>
<dbReference type="PDBsum" id="7TR1"/>
<dbReference type="PDBsum" id="7TR2"/>
<dbReference type="PDBsum" id="7TR3"/>
<dbReference type="PDBsum" id="7TTD"/>
<dbReference type="PDBsum" id="7TTE"/>
<dbReference type="PDBsum" id="7TTF"/>
<dbReference type="PDBsum" id="7XQX"/>
<dbReference type="PDBsum" id="7XQY"/>
<dbReference type="PDBsum" id="7XR0"/>
<dbReference type="PDBsum" id="7XR1"/>
<dbReference type="PDBsum" id="7YHN"/>
<dbReference type="PDBsum" id="7YSN"/>
<dbReference type="PDBsum" id="7YSO"/>
<dbReference type="PDBsum" id="7YSP"/>
<dbReference type="PDBsum" id="7Z2A"/>
<dbReference type="PDBsum" id="7Z2B"/>
<dbReference type="PDBsum" id="7Z2C"/>
<dbReference type="PDBsum" id="8DIQ"/>
<dbReference type="PDBsum" id="8F18"/>
<dbReference type="PDBsum" id="8F1A"/>
<dbReference type="PDBsum" id="8JJB"/>
<dbReference type="PDBsum" id="8JJC"/>
<dbReference type="PDBsum" id="8RC1"/>
<dbReference type="PDBsum" id="8RHB"/>
<dbReference type="PDBsum" id="8RHH"/>
<dbReference type="PDBsum" id="8RIK"/>
<dbReference type="PDBsum" id="8RIZ"/>
<dbReference type="PDBsum" id="8UTN"/>
<dbReference type="PDBsum" id="8UTO"/>
<dbReference type="PDBsum" id="8UTP"/>
<dbReference type="PDBsum" id="8UTQ"/>
<dbReference type="PDBsum" id="8UTR"/>
<dbReference type="PDBsum" id="8UTS"/>
<dbReference type="PDBsum" id="8UTT"/>
<dbReference type="PDBsum" id="8UTU"/>
<dbReference type="PDBsum" id="8UTV"/>
<dbReference type="PDBsum" id="8UTW"/>
<dbReference type="PDBsum" id="8UTY"/>
<dbReference type="PDBsum" id="8V4K"/>
<dbReference type="PDBsum" id="8V4L"/>
<dbReference type="PDBsum" id="8V4M"/>
<dbReference type="PDBsum" id="8WMO"/>
<dbReference type="PDBsum" id="8WMU"/>
<dbReference type="PDBsum" id="8YEM"/>
<dbReference type="PDBsum" id="8YER"/>
<dbReference type="PDBsum" id="8YEU"/>
<dbReference type="PDBsum" id="8YTX"/>
<dbReference type="PDBsum" id="8YU9"/>
<dbReference type="PDBsum" id="8YUA"/>
<dbReference type="PDBsum" id="8ZB8"/>
<dbReference type="PDBsum" id="9DUQ"/>
<dbReference type="PDBsum" id="9GNQ"/>
<dbReference type="PDBsum" id="9IM5"/>
<dbReference type="PDBsum" id="9IMO"/>
<dbReference type="EMDB" id="EMD-0612"/>
<dbReference type="EMDB" id="EMD-0613"/>
<dbReference type="EMDB" id="EMD-0614"/>
<dbReference type="EMDB" id="EMD-0615"/>
<dbReference type="EMDB" id="EMD-10060"/>
<dbReference type="EMDB" id="EMD-10061"/>
<dbReference type="EMDB" id="EMD-10421"/>
<dbReference type="EMDB" id="EMD-10422"/>
<dbReference type="EMDB" id="EMD-11340"/>
<dbReference type="EMDB" id="EMD-12257"/>
<dbReference type="EMDB" id="EMD-12258"/>
<dbReference type="EMDB" id="EMD-14459"/>
<dbReference type="EMDB" id="EMD-14460"/>
<dbReference type="EMDB" id="EMD-14461"/>
<dbReference type="EMDB" id="EMD-19042"/>
<dbReference type="EMDB" id="EMD-19043"/>
<dbReference type="EMDB" id="EMD-19044"/>
<dbReference type="EMDB" id="EMD-19174"/>
<dbReference type="EMDB" id="EMD-19176"/>
<dbReference type="EMDB" id="EMD-19188"/>
<dbReference type="EMDB" id="EMD-19192"/>
<dbReference type="EMDB" id="EMD-21932"/>
<dbReference type="EMDB" id="EMD-21933"/>
<dbReference type="EMDB" id="EMD-21934"/>
<dbReference type="EMDB" id="EMD-21935"/>
<dbReference type="EMDB" id="EMD-21936"/>
<dbReference type="EMDB" id="EMD-21937"/>
<dbReference type="EMDB" id="EMD-21938"/>
<dbReference type="EMDB" id="EMD-21939"/>
<dbReference type="EMDB" id="EMD-21940"/>
<dbReference type="EMDB" id="EMD-21941"/>
<dbReference type="EMDB" id="EMD-21942"/>
<dbReference type="EMDB" id="EMD-21943"/>
<dbReference type="EMDB" id="EMD-21944"/>
<dbReference type="EMDB" id="EMD-21945"/>
<dbReference type="EMDB" id="EMD-21946"/>
<dbReference type="EMDB" id="EMD-21947"/>
<dbReference type="EMDB" id="EMD-21948"/>
<dbReference type="EMDB" id="EMD-21949"/>
<dbReference type="EMDB" id="EMD-23540"/>
<dbReference type="EMDB" id="EMD-23541"/>
<dbReference type="EMDB" id="EMD-24667"/>
<dbReference type="EMDB" id="EMD-25120"/>
<dbReference type="EMDB" id="EMD-26074"/>
<dbReference type="EMDB" id="EMD-26075"/>
<dbReference type="EMDB" id="EMD-26076"/>
<dbReference type="EMDB" id="EMD-26077"/>
<dbReference type="EMDB" id="EMD-26078"/>
<dbReference type="EMDB" id="EMD-26079"/>
<dbReference type="EMDB" id="EMD-26080"/>
<dbReference type="EMDB" id="EMD-28787"/>
<dbReference type="EMDB" id="EMD-28789"/>
<dbReference type="EMDB" id="EMD-30775"/>
<dbReference type="EMDB" id="EMD-30776"/>
<dbReference type="EMDB" id="EMD-34077"/>
<dbReference type="EMDB" id="EMD-34078"/>
<dbReference type="EMDB" id="EMD-34079"/>
<dbReference type="EMDB" id="EMD-3961"/>
<dbReference type="EMDB" id="EMD-3962"/>
<dbReference type="EMDB" id="EMD-3963"/>
<dbReference type="EMDB" id="EMD-3964"/>
<dbReference type="EMDB" id="EMD-3965"/>
<dbReference type="EMDB" id="EMD-42543"/>
<dbReference type="EMDB" id="EMD-42544"/>
<dbReference type="EMDB" id="EMD-42545"/>
<dbReference type="EMDB" id="EMD-42546"/>
<dbReference type="EMDB" id="EMD-42547"/>
<dbReference type="EMDB" id="EMD-42548"/>
<dbReference type="EMDB" id="EMD-42549"/>
<dbReference type="EMDB" id="EMD-42550"/>
<dbReference type="EMDB" id="EMD-42551"/>
<dbReference type="EMDB" id="EMD-42552"/>
<dbReference type="EMDB" id="EMD-42553"/>
<dbReference type="EMDB" id="EMD-42971"/>
<dbReference type="EMDB" id="EMD-42972"/>
<dbReference type="EMDB" id="EMD-42973"/>
<dbReference type="EMDB" id="EMD-47173"/>
<dbReference type="EMDB" id="EMD-51007"/>
<dbReference type="EMDB" id="EMD-51008"/>
<dbReference type="EMDB" id="EMD-51010"/>
<dbReference type="EMDB" id="EMD-51477"/>
<dbReference type="EMDB" id="EMD-6187"/>
<dbReference type="EMDB" id="EMD-6188"/>
<dbReference type="EMDB" id="EMD-6347"/>
<dbReference type="EMDB" id="EMD-6348"/>
<dbReference type="EMDB" id="EMD-6349"/>
<dbReference type="EMDB" id="EMD-6350"/>
<dbReference type="EMDB" id="EMD-6351"/>
<dbReference type="EMDB" id="EMD-6352"/>
<dbReference type="EMDB" id="EMD-6353"/>
<dbReference type="EMDB" id="EMD-6354"/>
<dbReference type="EMDB" id="EMD-6355"/>
<dbReference type="EMDB" id="EMD-7026"/>
<dbReference type="EMDB" id="EMD-7027"/>
<dbReference type="EMDB" id="EMD-7028"/>
<dbReference type="EMDB" id="EMD-7101"/>
<dbReference type="EMDB" id="EMD-7520"/>
<dbReference type="EMDB" id="EMD-7522"/>
<dbReference type="EMDB" id="EMD-7523"/>
<dbReference type="EMDB" id="EMD-7769"/>
<dbReference type="EMDB" id="EMD-7771"/>
<dbReference type="EMDB" id="EMD-7973"/>
<dbReference type="EMDB" id="EMD-7974"/>
<dbReference type="EMDB" id="EMD-7975"/>
<dbReference type="EMDB" id="EMD-7976"/>
<dbReference type="EMDB" id="EMD-7977"/>
<dbReference type="EMDB" id="EMD-8266"/>
<dbReference type="SMR" id="Q2XVP4"/>
<dbReference type="BioGRID" id="1151209">
    <property type="interactions" value="3"/>
</dbReference>
<dbReference type="FunCoup" id="Q2XVP4">
    <property type="interactions" value="1072"/>
</dbReference>
<dbReference type="IntAct" id="Q2XVP4">
    <property type="interactions" value="1"/>
</dbReference>
<dbReference type="MINT" id="Q2XVP4"/>
<dbReference type="STRING" id="9823.ENSSSCP00000052065"/>
<dbReference type="PaxDb" id="9823-ENSSSCP00000000201"/>
<dbReference type="PeptideAtlas" id="Q2XVP4"/>
<dbReference type="Ensembl" id="ENSSSCT00000000203.3">
    <property type="protein sequence ID" value="ENSSSCP00000000201.1"/>
    <property type="gene ID" value="ENSSSCG00000000190.5"/>
</dbReference>
<dbReference type="Ensembl" id="ENSSSCT00025104974.1">
    <property type="protein sequence ID" value="ENSSSCP00025046786.1"/>
    <property type="gene ID" value="ENSSSCG00025075974.1"/>
</dbReference>
<dbReference type="Ensembl" id="ENSSSCT00025105012.1">
    <property type="protein sequence ID" value="ENSSSCP00025046809.1"/>
    <property type="gene ID" value="ENSSSCG00025075974.1"/>
</dbReference>
<dbReference type="Ensembl" id="ENSSSCT00025105031.1">
    <property type="protein sequence ID" value="ENSSSCP00025046823.1"/>
    <property type="gene ID" value="ENSSSCG00025075974.1"/>
</dbReference>
<dbReference type="Ensembl" id="ENSSSCT00025105097.1">
    <property type="protein sequence ID" value="ENSSSCP00025046871.1"/>
    <property type="gene ID" value="ENSSSCG00025075974.1"/>
</dbReference>
<dbReference type="Ensembl" id="ENSSSCT00025105116.1">
    <property type="protein sequence ID" value="ENSSSCP00025046884.1"/>
    <property type="gene ID" value="ENSSSCG00025075974.1"/>
</dbReference>
<dbReference type="Ensembl" id="ENSSSCT00025105125.1">
    <property type="protein sequence ID" value="ENSSSCP00025046892.1"/>
    <property type="gene ID" value="ENSSSCG00025075974.1"/>
</dbReference>
<dbReference type="Ensembl" id="ENSSSCT00030072802.1">
    <property type="protein sequence ID" value="ENSSSCP00030033226.1"/>
    <property type="gene ID" value="ENSSSCG00030052227.1"/>
</dbReference>
<dbReference type="Ensembl" id="ENSSSCT00030072855.1">
    <property type="protein sequence ID" value="ENSSSCP00030033255.1"/>
    <property type="gene ID" value="ENSSSCG00030052227.1"/>
</dbReference>
<dbReference type="Ensembl" id="ENSSSCT00030072867.1">
    <property type="protein sequence ID" value="ENSSSCP00030033258.1"/>
    <property type="gene ID" value="ENSSSCG00030052227.1"/>
</dbReference>
<dbReference type="Ensembl" id="ENSSSCT00030072920.1">
    <property type="protein sequence ID" value="ENSSSCP00030033279.1"/>
    <property type="gene ID" value="ENSSSCG00030052227.1"/>
</dbReference>
<dbReference type="Ensembl" id="ENSSSCT00030072953.1">
    <property type="protein sequence ID" value="ENSSSCP00030033289.1"/>
    <property type="gene ID" value="ENSSSCG00030052227.1"/>
</dbReference>
<dbReference type="Ensembl" id="ENSSSCT00045015361.1">
    <property type="protein sequence ID" value="ENSSSCP00045010672.1"/>
    <property type="gene ID" value="ENSSSCG00045009038.1"/>
</dbReference>
<dbReference type="Ensembl" id="ENSSSCT00045015393.1">
    <property type="protein sequence ID" value="ENSSSCP00045010692.1"/>
    <property type="gene ID" value="ENSSSCG00045009038.1"/>
</dbReference>
<dbReference type="Ensembl" id="ENSSSCT00050106926.1">
    <property type="protein sequence ID" value="ENSSSCP00050047234.1"/>
    <property type="gene ID" value="ENSSSCG00050077663.1"/>
</dbReference>
<dbReference type="Ensembl" id="ENSSSCT00050106963.1">
    <property type="protein sequence ID" value="ENSSSCP00050047247.1"/>
    <property type="gene ID" value="ENSSSCG00050077663.1"/>
</dbReference>
<dbReference type="Ensembl" id="ENSSSCT00055053005.1">
    <property type="protein sequence ID" value="ENSSSCP00055042310.1"/>
    <property type="gene ID" value="ENSSSCG00055026822.1"/>
</dbReference>
<dbReference type="Ensembl" id="ENSSSCT00055053336.1">
    <property type="protein sequence ID" value="ENSSSCP00055042561.1"/>
    <property type="gene ID" value="ENSSSCG00055026822.1"/>
</dbReference>
<dbReference type="Ensembl" id="ENSSSCT00055053372.1">
    <property type="protein sequence ID" value="ENSSSCP00055042592.1"/>
    <property type="gene ID" value="ENSSSCG00055026822.1"/>
</dbReference>
<dbReference type="Ensembl" id="ENSSSCT00055053447.1">
    <property type="protein sequence ID" value="ENSSSCP00055042642.1"/>
    <property type="gene ID" value="ENSSSCG00055026822.1"/>
</dbReference>
<dbReference type="Ensembl" id="ENSSSCT00055053516.1">
    <property type="protein sequence ID" value="ENSSSCP00055042690.1"/>
    <property type="gene ID" value="ENSSSCG00055026822.1"/>
</dbReference>
<dbReference type="Ensembl" id="ENSSSCT00060032656.1">
    <property type="protein sequence ID" value="ENSSSCP00060014002.1"/>
    <property type="gene ID" value="ENSSSCG00060024069.1"/>
</dbReference>
<dbReference type="Ensembl" id="ENSSSCT00060032723.1">
    <property type="protein sequence ID" value="ENSSSCP00060014034.1"/>
    <property type="gene ID" value="ENSSSCG00060024069.1"/>
</dbReference>
<dbReference type="Ensembl" id="ENSSSCT00060032732.1">
    <property type="protein sequence ID" value="ENSSSCP00060014039.1"/>
    <property type="gene ID" value="ENSSSCG00060024069.1"/>
</dbReference>
<dbReference type="Ensembl" id="ENSSSCT00060032754.1">
    <property type="protein sequence ID" value="ENSSSCP00060014055.1"/>
    <property type="gene ID" value="ENSSSCG00060024069.1"/>
</dbReference>
<dbReference type="Ensembl" id="ENSSSCT00065076751.1">
    <property type="protein sequence ID" value="ENSSSCP00065033387.1"/>
    <property type="gene ID" value="ENSSSCG00065056031.1"/>
</dbReference>
<dbReference type="Ensembl" id="ENSSSCT00065076770.1">
    <property type="protein sequence ID" value="ENSSSCP00065033392.1"/>
    <property type="gene ID" value="ENSSSCG00065056031.1"/>
</dbReference>
<dbReference type="Ensembl" id="ENSSSCT00065076787.1">
    <property type="protein sequence ID" value="ENSSSCP00065033394.1"/>
    <property type="gene ID" value="ENSSSCG00065056031.1"/>
</dbReference>
<dbReference type="Ensembl" id="ENSSSCT00070061341.1">
    <property type="protein sequence ID" value="ENSSSCP00070052289.1"/>
    <property type="gene ID" value="ENSSSCG00070030475.1"/>
</dbReference>
<dbReference type="Ensembl" id="ENSSSCT00070061342.1">
    <property type="protein sequence ID" value="ENSSSCP00070052290.1"/>
    <property type="gene ID" value="ENSSSCG00070030475.1"/>
</dbReference>
<dbReference type="Ensembl" id="ENSSSCT00070061347.1">
    <property type="protein sequence ID" value="ENSSSCP00070052295.1"/>
    <property type="gene ID" value="ENSSSCG00070030475.1"/>
</dbReference>
<dbReference type="Ensembl" id="ENSSSCT00085049135">
    <property type="protein sequence ID" value="ENSSSCP00085034456"/>
    <property type="gene ID" value="ENSSSCG00085025574"/>
</dbReference>
<dbReference type="Ensembl" id="ENSSSCT00105075023">
    <property type="protein sequence ID" value="ENSSSCP00105053089"/>
    <property type="gene ID" value="ENSSSCG00105039381"/>
</dbReference>
<dbReference type="Ensembl" id="ENSSSCT00110064791">
    <property type="protein sequence ID" value="ENSSSCP00110045447"/>
    <property type="gene ID" value="ENSSSCG00110034012"/>
</dbReference>
<dbReference type="Ensembl" id="ENSSSCT00115029314">
    <property type="protein sequence ID" value="ENSSSCP00115027825"/>
    <property type="gene ID" value="ENSSSCG00115016494"/>
</dbReference>
<dbReference type="GeneID" id="733594"/>
<dbReference type="KEGG" id="ssc:733594"/>
<dbReference type="CTD" id="10376"/>
<dbReference type="eggNOG" id="KOG1376">
    <property type="taxonomic scope" value="Eukaryota"/>
</dbReference>
<dbReference type="GeneTree" id="ENSGT00950000182825"/>
<dbReference type="HOGENOM" id="CLU_015718_0_0_1"/>
<dbReference type="InParanoid" id="Q2XVP4"/>
<dbReference type="OMA" id="ESCYDIC"/>
<dbReference type="OrthoDB" id="1844at2759"/>
<dbReference type="TreeFam" id="TF300314"/>
<dbReference type="Reactome" id="R-SSC-190840">
    <property type="pathway name" value="Microtubule-dependent trafficking of connexons from Golgi to the plasma membrane"/>
</dbReference>
<dbReference type="Reactome" id="R-SSC-2132295">
    <property type="pathway name" value="MHC class II antigen presentation"/>
</dbReference>
<dbReference type="Reactome" id="R-SSC-2467813">
    <property type="pathway name" value="Separation of Sister Chromatids"/>
</dbReference>
<dbReference type="Reactome" id="R-SSC-2500257">
    <property type="pathway name" value="Resolution of Sister Chromatid Cohesion"/>
</dbReference>
<dbReference type="Reactome" id="R-SSC-3371497">
    <property type="pathway name" value="HSP90 chaperone cycle for steroid hormone receptors (SHR) in the presence of ligand"/>
</dbReference>
<dbReference type="Reactome" id="R-SSC-380320">
    <property type="pathway name" value="Recruitment of NuMA to mitotic centrosomes"/>
</dbReference>
<dbReference type="Reactome" id="R-SSC-5610787">
    <property type="pathway name" value="Hedgehog 'off' state"/>
</dbReference>
<dbReference type="Reactome" id="R-SSC-5617833">
    <property type="pathway name" value="Cilium Assembly"/>
</dbReference>
<dbReference type="Reactome" id="R-SSC-5620924">
    <property type="pathway name" value="Intraflagellar transport"/>
</dbReference>
<dbReference type="Reactome" id="R-SSC-5626467">
    <property type="pathway name" value="RHO GTPases activate IQGAPs"/>
</dbReference>
<dbReference type="Reactome" id="R-SSC-5663220">
    <property type="pathway name" value="RHO GTPases Activate Formins"/>
</dbReference>
<dbReference type="Reactome" id="R-SSC-6807878">
    <property type="pathway name" value="COPI-mediated anterograde transport"/>
</dbReference>
<dbReference type="Reactome" id="R-SSC-6811434">
    <property type="pathway name" value="COPI-dependent Golgi-to-ER retrograde traffic"/>
</dbReference>
<dbReference type="Reactome" id="R-SSC-68877">
    <property type="pathway name" value="Mitotic Prometaphase"/>
</dbReference>
<dbReference type="Reactome" id="R-SSC-8852276">
    <property type="pathway name" value="The role of GTSE1 in G2/M progression after G2 checkpoint"/>
</dbReference>
<dbReference type="Reactome" id="R-SSC-8955332">
    <property type="pathway name" value="Carboxyterminal post-translational modifications of tubulin"/>
</dbReference>
<dbReference type="Reactome" id="R-SSC-9013407">
    <property type="pathway name" value="RHOH GTPase cycle"/>
</dbReference>
<dbReference type="Reactome" id="R-SSC-9646399">
    <property type="pathway name" value="Aggrephagy"/>
</dbReference>
<dbReference type="Reactome" id="R-SSC-9648025">
    <property type="pathway name" value="EML4 and NUDC in mitotic spindle formation"/>
</dbReference>
<dbReference type="Reactome" id="R-SSC-9668328">
    <property type="pathway name" value="Sealing of the nuclear envelope (NE) by ESCRT-III"/>
</dbReference>
<dbReference type="Reactome" id="R-SSC-983189">
    <property type="pathway name" value="Kinesins"/>
</dbReference>
<dbReference type="Reactome" id="R-SSC-9833482">
    <property type="pathway name" value="PKR-mediated signaling"/>
</dbReference>
<dbReference type="EvolutionaryTrace" id="Q2XVP4"/>
<dbReference type="Proteomes" id="UP000008227">
    <property type="component" value="Chromosome 5"/>
</dbReference>
<dbReference type="Proteomes" id="UP000314985">
    <property type="component" value="Chromosome 5"/>
</dbReference>
<dbReference type="Proteomes" id="UP000694570">
    <property type="component" value="Unplaced"/>
</dbReference>
<dbReference type="Proteomes" id="UP000694571">
    <property type="component" value="Unplaced"/>
</dbReference>
<dbReference type="Proteomes" id="UP000694720">
    <property type="component" value="Unplaced"/>
</dbReference>
<dbReference type="Proteomes" id="UP000694722">
    <property type="component" value="Unplaced"/>
</dbReference>
<dbReference type="Proteomes" id="UP000694723">
    <property type="component" value="Unplaced"/>
</dbReference>
<dbReference type="Proteomes" id="UP000694724">
    <property type="component" value="Unplaced"/>
</dbReference>
<dbReference type="Proteomes" id="UP000694725">
    <property type="component" value="Unplaced"/>
</dbReference>
<dbReference type="Proteomes" id="UP000694726">
    <property type="component" value="Unplaced"/>
</dbReference>
<dbReference type="Proteomes" id="UP000694727">
    <property type="component" value="Unplaced"/>
</dbReference>
<dbReference type="Proteomes" id="UP000694728">
    <property type="component" value="Unplaced"/>
</dbReference>
<dbReference type="Bgee" id="ENSSSCG00000000190">
    <property type="expression patterns" value="Expressed in hypothalamus and 41 other cell types or tissues"/>
</dbReference>
<dbReference type="ExpressionAtlas" id="Q2XVP4">
    <property type="expression patterns" value="baseline and differential"/>
</dbReference>
<dbReference type="GO" id="GO:0005737">
    <property type="term" value="C:cytoplasm"/>
    <property type="evidence" value="ECO:0000318"/>
    <property type="project" value="GO_Central"/>
</dbReference>
<dbReference type="GO" id="GO:0005874">
    <property type="term" value="C:microtubule"/>
    <property type="evidence" value="ECO:0000318"/>
    <property type="project" value="GO_Central"/>
</dbReference>
<dbReference type="GO" id="GO:0015630">
    <property type="term" value="C:microtubule cytoskeleton"/>
    <property type="evidence" value="ECO:0000250"/>
    <property type="project" value="UniProtKB"/>
</dbReference>
<dbReference type="GO" id="GO:0005525">
    <property type="term" value="F:GTP binding"/>
    <property type="evidence" value="ECO:0000250"/>
    <property type="project" value="UniProtKB"/>
</dbReference>
<dbReference type="GO" id="GO:0003924">
    <property type="term" value="F:GTPase activity"/>
    <property type="evidence" value="ECO:0000250"/>
    <property type="project" value="UniProtKB"/>
</dbReference>
<dbReference type="GO" id="GO:0046872">
    <property type="term" value="F:metal ion binding"/>
    <property type="evidence" value="ECO:0007669"/>
    <property type="project" value="UniProtKB-KW"/>
</dbReference>
<dbReference type="GO" id="GO:0005200">
    <property type="term" value="F:structural constituent of cytoskeleton"/>
    <property type="evidence" value="ECO:0000250"/>
    <property type="project" value="UniProtKB"/>
</dbReference>
<dbReference type="GO" id="GO:0000226">
    <property type="term" value="P:microtubule cytoskeleton organization"/>
    <property type="evidence" value="ECO:0000250"/>
    <property type="project" value="UniProtKB"/>
</dbReference>
<dbReference type="GO" id="GO:0000278">
    <property type="term" value="P:mitotic cell cycle"/>
    <property type="evidence" value="ECO:0000318"/>
    <property type="project" value="GO_Central"/>
</dbReference>
<dbReference type="CDD" id="cd02186">
    <property type="entry name" value="alpha_tubulin"/>
    <property type="match status" value="1"/>
</dbReference>
<dbReference type="FunFam" id="1.10.287.600:FF:000005">
    <property type="entry name" value="Tubulin alpha chain"/>
    <property type="match status" value="1"/>
</dbReference>
<dbReference type="FunFam" id="3.30.1330.20:FF:000001">
    <property type="entry name" value="Tubulin alpha chain"/>
    <property type="match status" value="1"/>
</dbReference>
<dbReference type="FunFam" id="3.40.50.1440:FF:000002">
    <property type="entry name" value="Tubulin alpha chain"/>
    <property type="match status" value="1"/>
</dbReference>
<dbReference type="Gene3D" id="1.10.287.600">
    <property type="entry name" value="Helix hairpin bin"/>
    <property type="match status" value="1"/>
</dbReference>
<dbReference type="Gene3D" id="3.30.1330.20">
    <property type="entry name" value="Tubulin/FtsZ, C-terminal domain"/>
    <property type="match status" value="1"/>
</dbReference>
<dbReference type="Gene3D" id="3.40.50.1440">
    <property type="entry name" value="Tubulin/FtsZ, GTPase domain"/>
    <property type="match status" value="1"/>
</dbReference>
<dbReference type="InterPro" id="IPR002452">
    <property type="entry name" value="Alpha_tubulin"/>
</dbReference>
<dbReference type="InterPro" id="IPR008280">
    <property type="entry name" value="Tub_FtsZ_C"/>
</dbReference>
<dbReference type="InterPro" id="IPR000217">
    <property type="entry name" value="Tubulin"/>
</dbReference>
<dbReference type="InterPro" id="IPR037103">
    <property type="entry name" value="Tubulin/FtsZ-like_C"/>
</dbReference>
<dbReference type="InterPro" id="IPR018316">
    <property type="entry name" value="Tubulin/FtsZ_2-layer-sand-dom"/>
</dbReference>
<dbReference type="InterPro" id="IPR036525">
    <property type="entry name" value="Tubulin/FtsZ_GTPase_sf"/>
</dbReference>
<dbReference type="InterPro" id="IPR023123">
    <property type="entry name" value="Tubulin_C"/>
</dbReference>
<dbReference type="InterPro" id="IPR017975">
    <property type="entry name" value="Tubulin_CS"/>
</dbReference>
<dbReference type="InterPro" id="IPR003008">
    <property type="entry name" value="Tubulin_FtsZ_GTPase"/>
</dbReference>
<dbReference type="PANTHER" id="PTHR11588">
    <property type="entry name" value="TUBULIN"/>
    <property type="match status" value="1"/>
</dbReference>
<dbReference type="Pfam" id="PF00091">
    <property type="entry name" value="Tubulin"/>
    <property type="match status" value="1"/>
</dbReference>
<dbReference type="Pfam" id="PF03953">
    <property type="entry name" value="Tubulin_C"/>
    <property type="match status" value="1"/>
</dbReference>
<dbReference type="PRINTS" id="PR01162">
    <property type="entry name" value="ALPHATUBULIN"/>
</dbReference>
<dbReference type="PRINTS" id="PR01161">
    <property type="entry name" value="TUBULIN"/>
</dbReference>
<dbReference type="SMART" id="SM00864">
    <property type="entry name" value="Tubulin"/>
    <property type="match status" value="1"/>
</dbReference>
<dbReference type="SMART" id="SM00865">
    <property type="entry name" value="Tubulin_C"/>
    <property type="match status" value="1"/>
</dbReference>
<dbReference type="SUPFAM" id="SSF55307">
    <property type="entry name" value="Tubulin C-terminal domain-like"/>
    <property type="match status" value="1"/>
</dbReference>
<dbReference type="SUPFAM" id="SSF52490">
    <property type="entry name" value="Tubulin nucleotide-binding domain-like"/>
    <property type="match status" value="1"/>
</dbReference>
<dbReference type="PROSITE" id="PS00227">
    <property type="entry name" value="TUBULIN"/>
    <property type="match status" value="1"/>
</dbReference>
<keyword id="KW-0002">3D-structure</keyword>
<keyword id="KW-0007">Acetylation</keyword>
<keyword id="KW-0963">Cytoplasm</keyword>
<keyword id="KW-0206">Cytoskeleton</keyword>
<keyword id="KW-0342">GTP-binding</keyword>
<keyword id="KW-0378">Hydrolase</keyword>
<keyword id="KW-1017">Isopeptide bond</keyword>
<keyword id="KW-0460">Magnesium</keyword>
<keyword id="KW-0479">Metal-binding</keyword>
<keyword id="KW-0488">Methylation</keyword>
<keyword id="KW-0493">Microtubule</keyword>
<keyword id="KW-0944">Nitration</keyword>
<keyword id="KW-0547">Nucleotide-binding</keyword>
<keyword id="KW-0597">Phosphoprotein</keyword>
<keyword id="KW-1185">Reference proteome</keyword>
<keyword id="KW-0832">Ubl conjugation</keyword>